<proteinExistence type="evidence at protein level"/>
<feature type="chain" id="PRO_0000178005" description="Mismatch repair endonuclease PMS2">
    <location>
        <begin position="1"/>
        <end position="862"/>
    </location>
</feature>
<feature type="region of interest" description="Disordered" evidence="1">
    <location>
        <begin position="391"/>
        <end position="552"/>
    </location>
</feature>
<feature type="short sequence motif" description="Nuclear localization signal" evidence="24">
    <location>
        <begin position="577"/>
        <end position="580"/>
    </location>
</feature>
<feature type="compositionally biased region" description="Basic and acidic residues" evidence="1">
    <location>
        <begin position="391"/>
        <end position="401"/>
    </location>
</feature>
<feature type="compositionally biased region" description="Basic and acidic residues" evidence="1">
    <location>
        <begin position="408"/>
        <end position="444"/>
    </location>
</feature>
<feature type="compositionally biased region" description="Basic and acidic residues" evidence="1">
    <location>
        <begin position="484"/>
        <end position="495"/>
    </location>
</feature>
<feature type="compositionally biased region" description="Basic and acidic residues" evidence="1">
    <location>
        <begin position="528"/>
        <end position="552"/>
    </location>
</feature>
<feature type="binding site" evidence="41 42">
    <location>
        <position position="45"/>
    </location>
    <ligand>
        <name>ATP</name>
        <dbReference type="ChEBI" id="CHEBI:30616"/>
    </ligand>
</feature>
<feature type="binding site" evidence="35 41 42">
    <location>
        <position position="70"/>
    </location>
    <ligand>
        <name>ATP</name>
        <dbReference type="ChEBI" id="CHEBI:30616"/>
    </ligand>
</feature>
<feature type="binding site" evidence="41">
    <location>
        <position position="109"/>
    </location>
    <ligand>
        <name>ATP</name>
        <dbReference type="ChEBI" id="CHEBI:30616"/>
    </ligand>
</feature>
<feature type="binding site" evidence="42">
    <location>
        <position position="110"/>
    </location>
    <ligand>
        <name>ATP</name>
        <dbReference type="ChEBI" id="CHEBI:30616"/>
    </ligand>
</feature>
<feature type="binding site" evidence="35 41 42">
    <location>
        <position position="111"/>
    </location>
    <ligand>
        <name>ATP</name>
        <dbReference type="ChEBI" id="CHEBI:30616"/>
    </ligand>
</feature>
<feature type="modified residue" description="Phosphothreonine" evidence="44">
    <location>
        <position position="573"/>
    </location>
</feature>
<feature type="modified residue" description="Phosphothreonine" evidence="43">
    <location>
        <position position="597"/>
    </location>
</feature>
<feature type="splice variant" id="VSP_029384" description="In isoform 4." evidence="32">
    <original>EYAK</original>
    <variation>QASV</variation>
    <location>
        <begin position="180"/>
        <end position="183"/>
    </location>
</feature>
<feature type="splice variant" id="VSP_029385" description="In isoform 4." evidence="32">
    <location>
        <begin position="184"/>
        <end position="862"/>
    </location>
</feature>
<feature type="splice variant" id="VSP_029386" description="In isoform 2." evidence="32">
    <location>
        <begin position="269"/>
        <end position="669"/>
    </location>
</feature>
<feature type="splice variant" id="VSP_029387" description="In isoform 3." evidence="32">
    <original>CKFRVLPQPTNLA</original>
    <variation>LKTGPSDPRTSMN</variation>
    <location>
        <begin position="560"/>
        <end position="572"/>
    </location>
</feature>
<feature type="splice variant" id="VSP_029388" description="In isoform 3." evidence="32">
    <location>
        <begin position="573"/>
        <end position="862"/>
    </location>
</feature>
<feature type="sequence variant" id="VAR_090152" description="In LYNCH4; uncertain significance; dbSNP:rs201343342." evidence="18">
    <original>I</original>
    <variation>T</variation>
    <location>
        <position position="18"/>
    </location>
</feature>
<feature type="sequence variant" id="VAR_078517" description="In LYNCH4; likely benign; normal DNA mismatch repair activity; dbSNP:rs63750123." evidence="9 10 18 21 22">
    <original>I</original>
    <variation>V</variation>
    <location>
        <position position="18"/>
    </location>
</feature>
<feature type="sequence variant" id="VAR_004469" description="In LYNCH4; benign; no effect on protein abundance; no effect on subcellular localization; normal DNA mismatch repair activity; dbSNP:rs10254120." evidence="9 18 20 21 28">
    <original>R</original>
    <variation>Q</variation>
    <location>
        <position position="20"/>
    </location>
</feature>
<feature type="sequence variant" id="VAR_079817" description="No effect on protein levels; dbSNP:rs587781918." evidence="23">
    <original>S</original>
    <variation>R</variation>
    <location>
        <position position="36"/>
    </location>
</feature>
<feature type="sequence variant" id="VAR_087079" description="In LYNCH4; strongly decreased DNA mismatch repair activity in an in vitro assay; loss of ATPase activity; reduced protein stability compared to wild-type; loss of structural identity; dbSNP:rs863224676." evidence="25 26">
    <location>
        <begin position="42"/>
        <end position="44"/>
    </location>
</feature>
<feature type="sequence variant" id="VAR_066838" description="In MMRCS4 and LYNCH4; strongly decreased DNA mismatch repair activity; no effect on protein abundance; no effect on subcellular localization; dbSNP:rs121434629." evidence="12 15 20 21 22">
    <original>S</original>
    <variation>I</variation>
    <location>
        <position position="46"/>
    </location>
</feature>
<feature type="sequence variant" id="VAR_078518" description="In LYNCH4; strongly decreased DNA mismatch repair activity; dbSNP:rs121434629." evidence="15 21">
    <original>S</original>
    <variation>N</variation>
    <location>
        <position position="46"/>
    </location>
</feature>
<feature type="sequence variant" id="VAR_078519" description="Normal DNA mismatch repair activity; dbSNP:rs200313585." evidence="21 22">
    <original>D</original>
    <variation>E</variation>
    <location>
        <position position="60"/>
    </location>
</feature>
<feature type="sequence variant" id="VAR_078520" description="In MMRCS4; uncertain significance; normal DNA mismatch repair activity; dbSNP:rs769554577." evidence="22">
    <original>I</original>
    <variation>T</variation>
    <location>
        <position position="66"/>
    </location>
</feature>
<feature type="sequence variant" id="VAR_078521" description="In MMRCS4; decreased DNA mismatch repair activity; dbSNP:rs188006077." evidence="22">
    <original>R</original>
    <variation>W</variation>
    <location>
        <position position="107"/>
    </location>
</feature>
<feature type="sequence variant" id="VAR_078522" description="In MMRCS4; decreased DNA mismatch repair activity." evidence="22">
    <original>C</original>
    <variation>G</variation>
    <location>
        <position position="115"/>
    </location>
</feature>
<feature type="sequence variant" id="VAR_090153" description="In LYNCH4; uncertain significance; dbSNP:rs116373169." evidence="18">
    <original>S</original>
    <variation>L</variation>
    <location>
        <position position="128"/>
    </location>
</feature>
<feature type="sequence variant" id="VAR_078523" description="In LYNCH4; uncertain significance; dbSNP:rs587779341." evidence="10">
    <original>A</original>
    <variation>T</variation>
    <location>
        <position position="182"/>
    </location>
</feature>
<feature type="sequence variant" id="VAR_078524" description="In MMRCS4 and LYNCH4; uncertain significance; normal DNA mismatch repair activity; dbSNP:rs587779342." evidence="15 21 22">
    <original>Q</original>
    <variation>P</variation>
    <location>
        <position position="205"/>
    </location>
</feature>
<feature type="sequence variant" id="VAR_078525" description="In LYNCH4; uncertain significance; normal DNA mismatch repair activity; no effect on protein stability compared to wild-type; no effect on ATPase activity; does not appear to induce a significant structural rearrangement; dbSNP:rs374704824." evidence="16 21 25">
    <original>G</original>
    <variation>E</variation>
    <location>
        <position position="207"/>
    </location>
</feature>
<feature type="sequence variant" id="VAR_087080" description="In LYNCH4; uncertain significance; no effect on DNA mismatch repair activity in an in vitro assay, compared to wild-type; no effect on ATPase activity; no effect on protein stability; dbSNP:rs201811667." evidence="26">
    <original>G</original>
    <variation>E</variation>
    <location>
        <position position="232"/>
    </location>
</feature>
<feature type="sequence variant" id="VAR_087081" description="In LYNCH4; uncertain significance; no effect on DNA mismatch repair activity in an in vitro assay, compared to wild-type; no effect on ATPase activity; no effect on protein stability; dbSNP:rs151251082." evidence="26">
    <original>S</original>
    <variation>R</variation>
    <location>
        <position position="238"/>
    </location>
</feature>
<feature type="sequence variant" id="VAR_078526" description="In MMRCS4 and LYNCH4; uncertain significance; normal DNA mismatch repair activity; dbSNP:rs587779345." evidence="21 22">
    <original>L</original>
    <variation>V</variation>
    <location>
        <position position="263"/>
    </location>
</feature>
<feature type="sequence variant" id="VAR_016133" description="In dbSNP:rs1805322.">
    <original>T</original>
    <variation>K</variation>
    <location>
        <position position="277"/>
    </location>
</feature>
<feature type="sequence variant" id="VAR_078527" description="In MMRCS4; uncertain significance; decreased DNA mismatch repair activity; dbSNP:rs587779346." evidence="22">
    <original>N</original>
    <variation>K</variation>
    <location>
        <position position="307"/>
    </location>
</feature>
<feature type="sequence variant" id="VAR_090154" description="In LYNCH4; uncertain significance; dbSNP:rs377043696." evidence="18">
    <original>V</original>
    <variation>I</variation>
    <location>
        <position position="321"/>
    </location>
</feature>
<feature type="sequence variant" id="VAR_087082" description="In LYNCH4; uncertain significance; no effect on DNA mismatch repair activity in an in vitro assay, compared to wild-type; loss of ATPase activity; retained ability to bind ATP; no effect on protein stability; dbSNP:rs200513014." evidence="26">
    <original>N</original>
    <variation>S</variation>
    <location>
        <position position="335"/>
    </location>
</feature>
<feature type="sequence variant" id="VAR_079012" description="Normal DNA mismatch repair activity; dbSNP:rs587778619." evidence="17 21">
    <original>A</original>
    <variation>T</variation>
    <location>
        <position position="423"/>
    </location>
</feature>
<feature type="sequence variant" id="VAR_078528" description="In MMRCS4; uncertain significance; normal DNA mismatch repair activity; dbSNP:rs200726484." evidence="22">
    <original>P</original>
    <variation>S</variation>
    <location>
        <position position="437"/>
    </location>
</feature>
<feature type="sequence variant" id="VAR_016134" description="In LYNCH4; benign; no effect on protein abundance; no effect on subcellular localization; normal DNA mismatch repair activity; dbSNP:rs1805321." evidence="5 9 18 20 22 31">
    <original>P</original>
    <variation>S</variation>
    <location>
        <position position="470"/>
    </location>
</feature>
<feature type="sequence variant" id="VAR_079818" description="No effect on protein levels; dbSNP:rs587781827." evidence="23">
    <original>V</original>
    <variation>E</variation>
    <location>
        <position position="475"/>
    </location>
</feature>
<feature type="sequence variant" id="VAR_012969" description="In MMRCS4 and LYNCH4; likely benign; normal DNA mismatch repair activity; dbSNP:rs63750685." evidence="2 18 21 22">
    <original>H</original>
    <variation>Q</variation>
    <location>
        <position position="479"/>
    </location>
</feature>
<feature type="sequence variant" id="VAR_012970" description="In LYNCH4; benign; normal DNA mismatch repair activity; dbSNP:rs1805323." evidence="2 9 18 21">
    <original>T</original>
    <variation>K</variation>
    <location>
        <position position="485"/>
    </location>
</feature>
<feature type="sequence variant" id="VAR_078529" description="In MMRCS4; uncertain significance; normal DNA mismatch repair activity; dbSNP:rs587779328." evidence="22">
    <original>A</original>
    <variation>V</variation>
    <location>
        <position position="488"/>
    </location>
</feature>
<feature type="sequence variant" id="VAR_078530" description="In MMRCS4; uncertain significance; normal DNA mismatch repair activity; dbSNP:rs368516768." evidence="22">
    <original>E</original>
    <variation>Q</variation>
    <location>
        <position position="504"/>
    </location>
</feature>
<feature type="sequence variant" id="VAR_012971" description="In LYNCH4; benign; normal DNA mismatch repair activity; dbSNP:rs2228007." evidence="2 18 21">
    <original>T</original>
    <variation>A</variation>
    <location>
        <position position="511"/>
    </location>
</feature>
<feature type="sequence variant" id="VAR_079013" description="Normal DNA mismatch repair activity; dbSNP:rs74902811." evidence="17 21">
    <original>T</original>
    <variation>M</variation>
    <location>
        <position position="511"/>
    </location>
</feature>
<feature type="sequence variant" id="VAR_079014" description="In dbSNP:rs2228007." evidence="17">
    <original>T</original>
    <variation>P</variation>
    <location>
        <position position="511"/>
    </location>
</feature>
<feature type="sequence variant" id="VAR_024541" description="Normal DNA mismatch repair activity; dbSNP:rs2228006." evidence="5 7 9 18 21 28 30 31">
    <original>K</original>
    <variation>E</variation>
    <location>
        <position position="541"/>
    </location>
</feature>
<feature type="sequence variant" id="VAR_078531" description="In LYNCH4; likely benign; normal DNA mismatch repair activity; dbSNP:rs63750668." evidence="10 15 18 21 22">
    <original>R</original>
    <variation>L</variation>
    <location>
        <position position="563"/>
    </location>
</feature>
<feature type="sequence variant" id="VAR_078532" description="Normal DNA mismatch repair activity; dbSNP:rs63750055." evidence="21 22">
    <original>L</original>
    <variation>I</variation>
    <location>
        <position position="571"/>
    </location>
</feature>
<feature type="sequence variant" id="VAR_078533" description="In MMRCS4 and LYNCH4; uncertain significance; normal DNA mismatch repair activity; dbSNP:rs63750947." evidence="9 21 22">
    <original>L</original>
    <variation>I</variation>
    <location>
        <position position="585"/>
    </location>
</feature>
<feature type="sequence variant" id="VAR_012972" description="In LYNCH4; benign; normal DNA mismatch repair activity; significantly reduced interaction with MLH1; dbSNP:rs1805318." evidence="2 4 9 18 20 21">
    <original>T</original>
    <variation>S</variation>
    <location>
        <position position="597"/>
    </location>
</feature>
<feature type="sequence variant" id="VAR_012973" description="In LYNCH4; benign; significantly reduced interaction with MLH1; normal DNA mismatch repair activity; dbSNP:rs1805324." evidence="2 4 7 9 15 18 21">
    <original>M</original>
    <variation>I</variation>
    <location>
        <position position="622"/>
    </location>
</feature>
<feature type="sequence variant" id="VAR_078534" description="In LYNCH4; uncertain significance; normal DNA mismatch repair activity; dbSNP:rs587779332." evidence="15 21">
    <original>E</original>
    <variation>A</variation>
    <location>
        <position position="663"/>
    </location>
</feature>
<feature type="sequence variant" id="VAR_079819" description="In LYNCH4; likely pathogenic; loss of DNA mismatch repair activity in an in vitro assay; dbSNP:rs587781317." evidence="18 23 26">
    <original>D</original>
    <variation>H</variation>
    <location>
        <position position="699"/>
    </location>
</feature>
<feature type="sequence variant" id="VAR_012974" description="In MMRCS4 and LYNCH4; likely pathogenic; loss of DNA mismatch repair activity; decreased protein stability; dbSNP:rs267608161." evidence="15 21 26 29">
    <original>E</original>
    <variation>K</variation>
    <location>
        <position position="705"/>
    </location>
</feature>
<feature type="sequence variant" id="VAR_078535" description="In LYNCH4; uncertain significance; decreased DNA mismatch repair activity; dbSNP:rs587779337." evidence="15 21">
    <original>G</original>
    <variation>D</variation>
    <location>
        <position position="750"/>
    </location>
</feature>
<feature type="sequence variant" id="VAR_016135" description="Normal DNA mismatch repair activity; dbSNP:rs17420802." evidence="20 22">
    <original>N</original>
    <variation>S</variation>
    <location>
        <position position="775"/>
    </location>
</feature>
<feature type="sequence variant" id="VAR_087083" description="In LYNCH4; uncertain significance; increased DNA mismatch repair activity in an in vitro assay; no effect on protein stability; dbSNP:rs587780053." evidence="26">
    <original>G</original>
    <variation>R</variation>
    <location>
        <position position="779"/>
    </location>
</feature>
<feature type="sequence variant" id="VAR_090155" description="In LYNCH4; likely benign; dbSNP:rs576055272." evidence="18">
    <original>L</original>
    <variation>M</variation>
    <location>
        <position position="786"/>
    </location>
</feature>
<feature type="sequence variant" id="VAR_079820" description="No effect on protein levels; dbSNP:rs587781265." evidence="23">
    <original>D</original>
    <variation>N</variation>
    <location>
        <position position="792"/>
    </location>
</feature>
<feature type="sequence variant" id="VAR_078536" description="In LYNCH4; uncertain significance; normal DNA mismatch repair activity; dbSNP:rs267608152." evidence="10 21">
    <original>M</original>
    <variation>R</variation>
    <location>
        <position position="797"/>
    </location>
</feature>
<feature type="sequence variant" id="VAR_087084" description="In LYNCH4; uncertain significance; increased DNA mismatch repair activity in an in vitro assay; no effect on protein stability; dbSNP:rs587780055." evidence="26">
    <original>R</original>
    <variation>Q</variation>
    <location>
        <position position="799"/>
    </location>
</feature>
<feature type="sequence variant" id="VAR_078537" description="In MMRCS4; decreased DNA mismatch repair activity; dbSNP:rs587779338." evidence="22">
    <original>S</original>
    <variation>L</variation>
    <location>
        <position position="815"/>
    </location>
</feature>
<feature type="sequence variant" id="VAR_087085" description="In LYNCH4; uncertain significance; may affect protein stability; no effect on DNA mismatch repair activity in an in vitro assay, compared to wild-type; dbSNP:rs1060503140." evidence="26">
    <original>V</original>
    <variation>E</variation>
    <location>
        <position position="816"/>
    </location>
</feature>
<feature type="sequence variant" id="VAR_078538" description="In LYNCH4; decreased DNA mismatch repair activity; dbSNP:rs267608174." evidence="15 21">
    <original>C</original>
    <variation>Y</variation>
    <location>
        <position position="843"/>
    </location>
</feature>
<feature type="sequence variant" id="VAR_079821" description="No effect on protein levels; dbSNP:rs371673459." evidence="23">
    <original>I</original>
    <variation>M</variation>
    <location>
        <position position="853"/>
    </location>
</feature>
<feature type="sequence variant" id="VAR_078539" description="In LYNCH4; benign; normal DNA mismatch repair activity; dbSNP:rs1802683." evidence="9 18 21">
    <original>G</original>
    <variation>A</variation>
    <location>
        <position position="857"/>
    </location>
</feature>
<feature type="mutagenesis site" description="Decreased DNA mismatch repair activity; loss of ATPase activity." evidence="3 21">
    <original>E</original>
    <variation>A</variation>
    <location>
        <position position="41"/>
    </location>
</feature>
<feature type="mutagenesis site" description="No effect on protein abundance, no effect on subcellular localization and loss of DNA mismatch repair activity." evidence="20">
    <original>D</original>
    <variation>N</variation>
    <location>
        <position position="70"/>
    </location>
</feature>
<feature type="mutagenesis site" description="No effect on DNA mismatch repair activity." evidence="21">
    <original>Y</original>
    <variation>C</variation>
    <location>
        <position position="519"/>
    </location>
</feature>
<feature type="mutagenesis site" description="Affects binding to importins alpha, including KPNA2, hence may affect import to the nucleus." evidence="24">
    <original>K</original>
    <variation>N</variation>
    <location>
        <position position="577"/>
    </location>
</feature>
<feature type="mutagenesis site" description="Affects binding to importins alpha, including KPNA2, hence may affect import to the nucleus." evidence="24">
    <original>R</original>
    <variation>N</variation>
    <location>
        <position position="578"/>
    </location>
</feature>
<feature type="strand" evidence="45">
    <location>
        <begin position="30"/>
        <end position="32"/>
    </location>
</feature>
<feature type="helix" evidence="45">
    <location>
        <begin position="35"/>
        <end position="48"/>
    </location>
</feature>
<feature type="strand" evidence="45">
    <location>
        <begin position="52"/>
        <end position="59"/>
    </location>
</feature>
<feature type="helix" evidence="45">
    <location>
        <begin position="60"/>
        <end position="62"/>
    </location>
</feature>
<feature type="strand" evidence="45">
    <location>
        <begin position="64"/>
        <end position="70"/>
    </location>
</feature>
<feature type="helix" evidence="45">
    <location>
        <begin position="77"/>
        <end position="79"/>
    </location>
</feature>
<feature type="helix" evidence="45">
    <location>
        <begin position="81"/>
        <end position="84"/>
    </location>
</feature>
<feature type="strand" evidence="45">
    <location>
        <begin position="101"/>
        <end position="109"/>
    </location>
</feature>
<feature type="helix" evidence="45">
    <location>
        <begin position="110"/>
        <end position="117"/>
    </location>
</feature>
<feature type="strand" evidence="45">
    <location>
        <begin position="118"/>
        <end position="125"/>
    </location>
</feature>
<feature type="strand" evidence="45">
    <location>
        <begin position="133"/>
        <end position="137"/>
    </location>
</feature>
<feature type="strand" evidence="45">
    <location>
        <begin position="143"/>
        <end position="148"/>
    </location>
</feature>
<feature type="strand" evidence="45">
    <location>
        <begin position="153"/>
        <end position="161"/>
    </location>
</feature>
<feature type="turn" evidence="45">
    <location>
        <begin position="162"/>
        <end position="165"/>
    </location>
</feature>
<feature type="helix" evidence="45">
    <location>
        <begin position="167"/>
        <end position="175"/>
    </location>
</feature>
<feature type="helix" evidence="45">
    <location>
        <begin position="177"/>
        <end position="194"/>
    </location>
</feature>
<feature type="strand" evidence="45">
    <location>
        <begin position="199"/>
        <end position="205"/>
    </location>
</feature>
<feature type="strand" evidence="45">
    <location>
        <begin position="211"/>
        <end position="216"/>
    </location>
</feature>
<feature type="helix" evidence="45">
    <location>
        <begin position="223"/>
        <end position="231"/>
    </location>
</feature>
<feature type="helix" evidence="45">
    <location>
        <begin position="233"/>
        <end position="237"/>
    </location>
</feature>
<feature type="strand" evidence="45">
    <location>
        <begin position="239"/>
        <end position="241"/>
    </location>
</feature>
<feature type="helix" evidence="45">
    <location>
        <begin position="249"/>
        <end position="255"/>
    </location>
</feature>
<feature type="turn" evidence="45">
    <location>
        <begin position="259"/>
        <end position="263"/>
    </location>
</feature>
<feature type="strand" evidence="45">
    <location>
        <begin position="268"/>
        <end position="274"/>
    </location>
</feature>
<feature type="turn" evidence="45">
    <location>
        <begin position="278"/>
        <end position="280"/>
    </location>
</feature>
<feature type="strand" evidence="45">
    <location>
        <begin position="281"/>
        <end position="285"/>
    </location>
</feature>
<feature type="strand" evidence="45">
    <location>
        <begin position="288"/>
        <end position="292"/>
    </location>
</feature>
<feature type="strand" evidence="45">
    <location>
        <begin position="295"/>
        <end position="297"/>
    </location>
</feature>
<feature type="helix" evidence="45">
    <location>
        <begin position="300"/>
        <end position="311"/>
    </location>
</feature>
<feature type="strand" evidence="45">
    <location>
        <begin position="321"/>
        <end position="326"/>
    </location>
</feature>
<feature type="helix" evidence="45">
    <location>
        <begin position="329"/>
        <end position="331"/>
    </location>
</feature>
<feature type="strand" evidence="45">
    <location>
        <begin position="332"/>
        <end position="334"/>
    </location>
</feature>
<feature type="strand" evidence="45">
    <location>
        <begin position="343"/>
        <end position="345"/>
    </location>
</feature>
<feature type="helix" evidence="45">
    <location>
        <begin position="348"/>
        <end position="363"/>
    </location>
</feature>
<protein>
    <recommendedName>
        <fullName evidence="33">Mismatch repair endonuclease PMS2</fullName>
        <ecNumber evidence="3 25">3.1.-.-</ecNumber>
    </recommendedName>
    <alternativeName>
        <fullName>DNA mismatch repair protein PMS2</fullName>
    </alternativeName>
    <alternativeName>
        <fullName>PMS1 protein homolog 2</fullName>
    </alternativeName>
</protein>
<organism>
    <name type="scientific">Homo sapiens</name>
    <name type="common">Human</name>
    <dbReference type="NCBI Taxonomy" id="9606"/>
    <lineage>
        <taxon>Eukaryota</taxon>
        <taxon>Metazoa</taxon>
        <taxon>Chordata</taxon>
        <taxon>Craniata</taxon>
        <taxon>Vertebrata</taxon>
        <taxon>Euteleostomi</taxon>
        <taxon>Mammalia</taxon>
        <taxon>Eutheria</taxon>
        <taxon>Euarchontoglires</taxon>
        <taxon>Primates</taxon>
        <taxon>Haplorrhini</taxon>
        <taxon>Catarrhini</taxon>
        <taxon>Hominidae</taxon>
        <taxon>Homo</taxon>
    </lineage>
</organism>
<keyword id="KW-0002">3D-structure</keyword>
<keyword id="KW-0025">Alternative splicing</keyword>
<keyword id="KW-0067">ATP-binding</keyword>
<keyword id="KW-0225">Disease variant</keyword>
<keyword id="KW-0227">DNA damage</keyword>
<keyword id="KW-0234">DNA repair</keyword>
<keyword id="KW-0238">DNA-binding</keyword>
<keyword id="KW-0255">Endonuclease</keyword>
<keyword id="KW-0362">Hereditary nonpolyposis colorectal cancer</keyword>
<keyword id="KW-0378">Hydrolase</keyword>
<keyword id="KW-0540">Nuclease</keyword>
<keyword id="KW-0547">Nucleotide-binding</keyword>
<keyword id="KW-0539">Nucleus</keyword>
<keyword id="KW-0597">Phosphoprotein</keyword>
<keyword id="KW-1267">Proteomics identification</keyword>
<keyword id="KW-1185">Reference proteome</keyword>
<keyword id="KW-0043">Tumor suppressor</keyword>
<comment type="function">
    <text evidence="11 14 20 25 26">Component of the post-replicative DNA mismatch repair system (MMR) (PubMed:30653781, PubMed:35189042). Heterodimerizes with MLH1 to form MutL alpha. DNA repair is initiated by MutS alpha (MSH2-MSH6) or MutS beta (MSH2-MSH3) binding to a dsDNA mismatch, then MutL alpha is recruited to the heteroduplex. Assembly of the MutL-MutS-heteroduplex ternary complex in presence of RFC and PCNA is sufficient to activate endonuclease activity of PMS2. It introduces single-strand breaks near the mismatch and thus generates new entry points for the exonuclease EXO1 to degrade the strand containing the mismatch. DNA methylation would prevent cleavage and therefore assure that only the newly mutated DNA strand is going to be corrected. MutL alpha (MLH1-PMS2) interacts physically with the clamp loader subunits of DNA polymerase III, suggesting that it may play a role to recruit the DNA polymerase III to the site of the MMR. Also implicated in DNA damage signaling, a process which induces cell cycle arrest and can lead to apoptosis in case of major DNA damages. Possesses an ATPase activity, but in the absence of gross structural changes, ATP hydrolysis may not be necessary for proficient mismatch repair (PubMed:35189042).</text>
</comment>
<comment type="catalytic activity">
    <reaction evidence="3 25">
        <text>ATP + H2O = ADP + phosphate + H(+)</text>
        <dbReference type="Rhea" id="RHEA:13065"/>
        <dbReference type="ChEBI" id="CHEBI:15377"/>
        <dbReference type="ChEBI" id="CHEBI:15378"/>
        <dbReference type="ChEBI" id="CHEBI:30616"/>
        <dbReference type="ChEBI" id="CHEBI:43474"/>
        <dbReference type="ChEBI" id="CHEBI:456216"/>
    </reaction>
    <physiologicalReaction direction="left-to-right" evidence="3 25">
        <dbReference type="Rhea" id="RHEA:13066"/>
    </physiologicalReaction>
</comment>
<comment type="biophysicochemical properties">
    <kinetics>
        <KM evidence="3">100 uM for ATP</KM>
        <text evidence="3">kcat is 0.2 min(-1) with ATP as substrate at pH 8 at room temperature. The ATPase activity is not affected by the presence of DNA and does not require dimer formation.</text>
    </kinetics>
</comment>
<comment type="subunit">
    <text evidence="19 26">Heterodimer of PMS2 and MLH1 (MutL alpha); this interaction is required for the stability of both partners (PubMed:35189042). Forms a ternary complex with MutS alpha (MSH2-MSH6) or MutS beta (MSH2-MSH3). Part of the BRCA1-associated genome surveillance complex (BASC), which contains BRCA1, MSH2, MSH6, MLH1, ATM, BLM, PMS2 and the RAD50-MRE11-NBS1 protein complex. This association could be a dynamic process changing throughout the cell cycle and within subnuclear domains. Interacts with MTMR15/FAN1.</text>
</comment>
<comment type="interaction">
    <interactant intactId="EBI-1162561">
        <id>P54278</id>
    </interactant>
    <interactant intactId="EBI-744248">
        <id>P40692</id>
        <label>MLH1</label>
    </interactant>
    <organismsDiffer>false</organismsDiffer>
    <experiments>23</experiments>
</comment>
<comment type="interaction">
    <interactant intactId="EBI-15726984">
        <id>P54278-1</id>
    </interactant>
    <interactant intactId="EBI-389606">
        <id>O15350</id>
        <label>TP73</label>
    </interactant>
    <organismsDiffer>false</organismsDiffer>
    <experiments>3</experiments>
</comment>
<comment type="interaction">
    <interactant intactId="EBI-12176841">
        <id>P54278-2</id>
    </interactant>
    <interactant intactId="EBI-16439278">
        <id>Q6FHY5</id>
        <label>MEOX2</label>
    </interactant>
    <organismsDiffer>false</organismsDiffer>
    <experiments>3</experiments>
</comment>
<comment type="subcellular location">
    <subcellularLocation>
        <location evidence="20 25">Nucleus</location>
    </subcellularLocation>
</comment>
<comment type="alternative products">
    <event type="alternative splicing"/>
    <isoform>
        <id>P54278-1</id>
        <name>1</name>
        <sequence type="displayed"/>
    </isoform>
    <isoform>
        <id>P54278-2</id>
        <name>2</name>
        <sequence type="described" ref="VSP_029386"/>
    </isoform>
    <isoform>
        <id>P54278-3</id>
        <name>3</name>
        <sequence type="described" ref="VSP_029387 VSP_029388"/>
    </isoform>
    <isoform>
        <id>P54278-4</id>
        <name>4</name>
        <sequence type="described" ref="VSP_029384 VSP_029385"/>
    </isoform>
</comment>
<comment type="disease" evidence="2 4 8 9 10 13 15 16 18 20 21 25 26">
    <disease id="DI-00553">
        <name>Lynch syndrome 4</name>
        <acronym>LYNCH4</acronym>
        <description>A form of Lynch syndrome, an autosomal dominant disease associated with marked increase in cancer susceptibility. It is characterized by a familial predisposition to early-onset colorectal carcinoma (CRC) and extra-colonic tumors of the gastrointestinal, urological and female reproductive tracts. Lynch syndrome is reported to be the most common form of inherited colorectal cancer in the Western world. Clinically, it is often divided into two subgroups. Type I is characterized by hereditary predisposition to colorectal cancer, a young age of onset, and carcinoma observed in the proximal colon. Type II is characterized by increased risk for cancers in certain tissues such as the uterus, ovary, breast, stomach, small intestine, skin, and larynx in addition to the colon. Diagnosis of classical Lynch syndrome is based on the Amsterdam criteria: 3 or more relatives affected by colorectal cancer, one a first degree relative of the other two; 2 or more generation affected; 1 or more colorectal cancers presenting before 50 years of age; exclusion of hereditary polyposis syndromes. The term 'suspected Lynch syndrome' or 'incomplete Lynch syndrome' can be used to describe families who do not or only partially fulfill the Amsterdam criteria, but in whom a genetic basis for colon cancer is strongly suspected.</description>
        <dbReference type="MIM" id="614337"/>
    </disease>
    <text>The disease is caused by variants affecting the gene represented in this entry.</text>
</comment>
<comment type="disease" evidence="6 12 22 27 29">
    <disease id="DI-05971">
        <name>Mismatch repair cancer syndrome 4</name>
        <acronym>MMRCS4</acronym>
        <description>An autosomal recessive form of mismatch repair cancer syndrome, a childhood cancer predisposition syndrome encompassing a broad tumor spectrum. This includes hematological malignancies, central nervous system tumors, Lynch syndrome-associated malignancies such as colorectal tumors as well as multiple intestinal polyps, embryonic tumors and rhabdomyosarcoma. Multiple cafe-au-lait macules, a feature reminiscent of neurofibromatosis type 1, are often found as first manifestation of the underlying cancer.</description>
        <dbReference type="MIM" id="619101"/>
    </disease>
    <text>The disease is caused by variants affecting the gene represented in this entry.</text>
</comment>
<comment type="similarity">
    <text evidence="33">Belongs to the DNA mismatch repair MutL/HexB family.</text>
</comment>
<evidence type="ECO:0000256" key="1">
    <source>
        <dbReference type="SAM" id="MobiDB-lite"/>
    </source>
</evidence>
<evidence type="ECO:0000269" key="2">
    <source>
    </source>
</evidence>
<evidence type="ECO:0000269" key="3">
    <source>
    </source>
</evidence>
<evidence type="ECO:0000269" key="4">
    <source>
    </source>
</evidence>
<evidence type="ECO:0000269" key="5">
    <source>
    </source>
</evidence>
<evidence type="ECO:0000269" key="6">
    <source>
    </source>
</evidence>
<evidence type="ECO:0000269" key="7">
    <source>
    </source>
</evidence>
<evidence type="ECO:0000269" key="8">
    <source>
    </source>
</evidence>
<evidence type="ECO:0000269" key="9">
    <source>
    </source>
</evidence>
<evidence type="ECO:0000269" key="10">
    <source>
    </source>
</evidence>
<evidence type="ECO:0000269" key="11">
    <source>
    </source>
</evidence>
<evidence type="ECO:0000269" key="12">
    <source>
    </source>
</evidence>
<evidence type="ECO:0000269" key="13">
    <source>
    </source>
</evidence>
<evidence type="ECO:0000269" key="14">
    <source>
    </source>
</evidence>
<evidence type="ECO:0000269" key="15">
    <source>
    </source>
</evidence>
<evidence type="ECO:0000269" key="16">
    <source>
    </source>
</evidence>
<evidence type="ECO:0000269" key="17">
    <source>
    </source>
</evidence>
<evidence type="ECO:0000269" key="18">
    <source>
    </source>
</evidence>
<evidence type="ECO:0000269" key="19">
    <source>
    </source>
</evidence>
<evidence type="ECO:0000269" key="20">
    <source>
    </source>
</evidence>
<evidence type="ECO:0000269" key="21">
    <source>
    </source>
</evidence>
<evidence type="ECO:0000269" key="22">
    <source>
    </source>
</evidence>
<evidence type="ECO:0000269" key="23">
    <source>
    </source>
</evidence>
<evidence type="ECO:0000269" key="24">
    <source>
    </source>
</evidence>
<evidence type="ECO:0000269" key="25">
    <source>
    </source>
</evidence>
<evidence type="ECO:0000269" key="26">
    <source>
    </source>
</evidence>
<evidence type="ECO:0000269" key="27">
    <source>
    </source>
</evidence>
<evidence type="ECO:0000269" key="28">
    <source>
    </source>
</evidence>
<evidence type="ECO:0000269" key="29">
    <source>
    </source>
</evidence>
<evidence type="ECO:0000269" key="30">
    <source ref="2"/>
</evidence>
<evidence type="ECO:0000269" key="31">
    <source ref="3"/>
</evidence>
<evidence type="ECO:0000303" key="32">
    <source ref="2"/>
</evidence>
<evidence type="ECO:0000305" key="33"/>
<evidence type="ECO:0000312" key="34">
    <source>
        <dbReference type="HGNC" id="HGNC:9122"/>
    </source>
</evidence>
<evidence type="ECO:0007744" key="35">
    <source>
        <dbReference type="PDB" id="1EA6"/>
    </source>
</evidence>
<evidence type="ECO:0007744" key="36">
    <source>
        <dbReference type="PDB" id="1H7S"/>
    </source>
</evidence>
<evidence type="ECO:0007744" key="37">
    <source>
        <dbReference type="PDB" id="1H7U"/>
    </source>
</evidence>
<evidence type="ECO:0007744" key="38">
    <source>
        <dbReference type="PDB" id="5U5R"/>
    </source>
</evidence>
<evidence type="ECO:0007744" key="39">
    <source>
        <dbReference type="PDB" id="6MFQ"/>
    </source>
</evidence>
<evidence type="ECO:0007744" key="40">
    <source>
        <dbReference type="PDB" id="7RCB"/>
    </source>
</evidence>
<evidence type="ECO:0007744" key="41">
    <source>
        <dbReference type="PDB" id="7RCI"/>
    </source>
</evidence>
<evidence type="ECO:0007744" key="42">
    <source>
        <dbReference type="PDB" id="7RCK"/>
    </source>
</evidence>
<evidence type="ECO:0007744" key="43">
    <source>
    </source>
</evidence>
<evidence type="ECO:0007744" key="44">
    <source>
    </source>
</evidence>
<evidence type="ECO:0007829" key="45">
    <source>
        <dbReference type="PDB" id="1H7S"/>
    </source>
</evidence>
<dbReference type="EC" id="3.1.-.-" evidence="3 25"/>
<dbReference type="EMBL" id="U13696">
    <property type="protein sequence ID" value="AAA63923.1"/>
    <property type="molecule type" value="Genomic_DNA"/>
</dbReference>
<dbReference type="EMBL" id="AB103082">
    <property type="protein sequence ID" value="BAD89425.1"/>
    <property type="molecule type" value="mRNA"/>
</dbReference>
<dbReference type="EMBL" id="AB103083">
    <property type="protein sequence ID" value="BAD89426.1"/>
    <property type="molecule type" value="mRNA"/>
</dbReference>
<dbReference type="EMBL" id="AB103085">
    <property type="protein sequence ID" value="BAD89428.1"/>
    <property type="molecule type" value="mRNA"/>
</dbReference>
<dbReference type="EMBL" id="U14658">
    <property type="protein sequence ID" value="AAA50390.1"/>
    <property type="molecule type" value="mRNA"/>
</dbReference>
<dbReference type="EMBL" id="AK312390">
    <property type="protein sequence ID" value="BAG35307.1"/>
    <property type="molecule type" value="mRNA"/>
</dbReference>
<dbReference type="EMBL" id="AC005995">
    <property type="protein sequence ID" value="AAS00390.1"/>
    <property type="molecule type" value="Genomic_DNA"/>
</dbReference>
<dbReference type="EMBL" id="BC093921">
    <property type="protein sequence ID" value="AAH93921.1"/>
    <property type="molecule type" value="mRNA"/>
</dbReference>
<dbReference type="CCDS" id="CCDS5343.1">
    <molecule id="P54278-1"/>
</dbReference>
<dbReference type="PIR" id="S47598">
    <property type="entry name" value="S47598"/>
</dbReference>
<dbReference type="RefSeq" id="NP_000526.2">
    <molecule id="P54278-1"/>
    <property type="nucleotide sequence ID" value="NM_000535.7"/>
</dbReference>
<dbReference type="RefSeq" id="NP_001308932.1">
    <property type="nucleotide sequence ID" value="NM_001322003.1"/>
</dbReference>
<dbReference type="RefSeq" id="NP_001308933.1">
    <property type="nucleotide sequence ID" value="NM_001322004.1"/>
</dbReference>
<dbReference type="RefSeq" id="NP_001308934.1">
    <property type="nucleotide sequence ID" value="NM_001322005.1"/>
</dbReference>
<dbReference type="RefSeq" id="NP_001308935.1">
    <property type="nucleotide sequence ID" value="NM_001322006.1"/>
</dbReference>
<dbReference type="RefSeq" id="NP_001308936.1">
    <property type="nucleotide sequence ID" value="NM_001322007.1"/>
</dbReference>
<dbReference type="RefSeq" id="NP_001308937.1">
    <property type="nucleotide sequence ID" value="NM_001322008.1"/>
</dbReference>
<dbReference type="RefSeq" id="NP_001308938.1">
    <property type="nucleotide sequence ID" value="NM_001322009.1"/>
</dbReference>
<dbReference type="RefSeq" id="NP_001308939.1">
    <property type="nucleotide sequence ID" value="NM_001322010.1"/>
</dbReference>
<dbReference type="RefSeq" id="NP_001308940.1">
    <property type="nucleotide sequence ID" value="NM_001322011.1"/>
</dbReference>
<dbReference type="RefSeq" id="NP_001308941.1">
    <property type="nucleotide sequence ID" value="NM_001322012.1"/>
</dbReference>
<dbReference type="RefSeq" id="NP_001308942.1">
    <property type="nucleotide sequence ID" value="NM_001322013.1"/>
</dbReference>
<dbReference type="RefSeq" id="NP_001308943.1">
    <property type="nucleotide sequence ID" value="NM_001322014.1"/>
</dbReference>
<dbReference type="RefSeq" id="NP_001308944.1">
    <property type="nucleotide sequence ID" value="NM_001322015.1"/>
</dbReference>
<dbReference type="RefSeq" id="NP_001393841.1">
    <molecule id="P54278-2"/>
    <property type="nucleotide sequence ID" value="NM_001406912.1"/>
</dbReference>
<dbReference type="RefSeq" id="XP_016885888.1">
    <property type="nucleotide sequence ID" value="XM_017030399.1"/>
</dbReference>
<dbReference type="PDB" id="1EA6">
    <property type="method" value="X-ray"/>
    <property type="resolution" value="2.70 A"/>
    <property type="chains" value="A/B=1-364"/>
</dbReference>
<dbReference type="PDB" id="1H7S">
    <property type="method" value="X-ray"/>
    <property type="resolution" value="1.95 A"/>
    <property type="chains" value="A/B=1-365"/>
</dbReference>
<dbReference type="PDB" id="1H7U">
    <property type="method" value="X-ray"/>
    <property type="resolution" value="2.70 A"/>
    <property type="chains" value="A/B=1-365"/>
</dbReference>
<dbReference type="PDB" id="5U5R">
    <property type="method" value="X-ray"/>
    <property type="resolution" value="2.10 A"/>
    <property type="chains" value="B=573-583"/>
</dbReference>
<dbReference type="PDB" id="6MFQ">
    <property type="method" value="X-ray"/>
    <property type="resolution" value="2.60 A"/>
    <property type="chains" value="A/B=1-365"/>
</dbReference>
<dbReference type="PDB" id="7RCB">
    <property type="method" value="X-ray"/>
    <property type="resolution" value="2.00 A"/>
    <property type="chains" value="A/B=1-365"/>
</dbReference>
<dbReference type="PDB" id="7RCI">
    <property type="method" value="X-ray"/>
    <property type="resolution" value="2.12 A"/>
    <property type="chains" value="A/B=1-365"/>
</dbReference>
<dbReference type="PDB" id="7RCK">
    <property type="method" value="X-ray"/>
    <property type="resolution" value="2.04 A"/>
    <property type="chains" value="A/B=1-365"/>
</dbReference>
<dbReference type="PDBsum" id="1EA6"/>
<dbReference type="PDBsum" id="1H7S"/>
<dbReference type="PDBsum" id="1H7U"/>
<dbReference type="PDBsum" id="5U5R"/>
<dbReference type="PDBsum" id="6MFQ"/>
<dbReference type="PDBsum" id="7RCB"/>
<dbReference type="PDBsum" id="7RCI"/>
<dbReference type="PDBsum" id="7RCK"/>
<dbReference type="SMR" id="P54278"/>
<dbReference type="BioGRID" id="111404">
    <property type="interactions" value="84"/>
</dbReference>
<dbReference type="ComplexPortal" id="CPX-9901">
    <property type="entry name" value="MutLalpha endonuclease complex"/>
</dbReference>
<dbReference type="CORUM" id="P54278"/>
<dbReference type="DIP" id="DIP-46295N"/>
<dbReference type="FunCoup" id="P54278">
    <property type="interactions" value="3824"/>
</dbReference>
<dbReference type="IntAct" id="P54278">
    <property type="interactions" value="37"/>
</dbReference>
<dbReference type="MINT" id="P54278"/>
<dbReference type="STRING" id="9606.ENSP00000265849"/>
<dbReference type="DrugBank" id="DB02930">
    <property type="generic name" value="Adenosine 5'-[gamma-thio]triphosphate"/>
</dbReference>
<dbReference type="GlyGen" id="P54278">
    <property type="glycosylation" value="1 site, 1 O-linked glycan (1 site)"/>
</dbReference>
<dbReference type="iPTMnet" id="P54278"/>
<dbReference type="PhosphoSitePlus" id="P54278"/>
<dbReference type="BioMuta" id="PMS2"/>
<dbReference type="DMDM" id="317373266"/>
<dbReference type="jPOST" id="P54278"/>
<dbReference type="MassIVE" id="P54278"/>
<dbReference type="PaxDb" id="9606-ENSP00000265849"/>
<dbReference type="PeptideAtlas" id="P54278"/>
<dbReference type="ProteomicsDB" id="56669">
    <molecule id="P54278-1"/>
</dbReference>
<dbReference type="ProteomicsDB" id="56670">
    <molecule id="P54278-2"/>
</dbReference>
<dbReference type="ProteomicsDB" id="56671">
    <molecule id="P54278-3"/>
</dbReference>
<dbReference type="ProteomicsDB" id="56672">
    <molecule id="P54278-4"/>
</dbReference>
<dbReference type="Pumba" id="P54278"/>
<dbReference type="Antibodypedia" id="4134">
    <property type="antibodies" value="608 antibodies from 43 providers"/>
</dbReference>
<dbReference type="CPTC" id="P54278">
    <property type="antibodies" value="1 antibody"/>
</dbReference>
<dbReference type="DNASU" id="5395"/>
<dbReference type="Ensembl" id="ENST00000265849.12">
    <molecule id="P54278-1"/>
    <property type="protein sequence ID" value="ENSP00000265849.7"/>
    <property type="gene ID" value="ENSG00000122512.17"/>
</dbReference>
<dbReference type="Ensembl" id="ENST00000382321.5">
    <molecule id="P54278-2"/>
    <property type="protein sequence ID" value="ENSP00000371758.4"/>
    <property type="gene ID" value="ENSG00000122512.17"/>
</dbReference>
<dbReference type="Ensembl" id="ENST00000406569.8">
    <molecule id="P54278-3"/>
    <property type="protein sequence ID" value="ENSP00000514464.1"/>
    <property type="gene ID" value="ENSG00000122512.17"/>
</dbReference>
<dbReference type="Ensembl" id="ENST00000643595.1">
    <molecule id="P54278-4"/>
    <property type="protein sequence ID" value="ENSP00000494497.1"/>
    <property type="gene ID" value="ENSG00000122512.17"/>
</dbReference>
<dbReference type="Ensembl" id="ENST00000699929.1">
    <molecule id="P54278-4"/>
    <property type="protein sequence ID" value="ENSP00000514694.1"/>
    <property type="gene ID" value="ENSG00000122512.17"/>
</dbReference>
<dbReference type="GeneID" id="5395"/>
<dbReference type="KEGG" id="hsa:5395"/>
<dbReference type="MANE-Select" id="ENST00000265849.12">
    <property type="protein sequence ID" value="ENSP00000265849.7"/>
    <property type="RefSeq nucleotide sequence ID" value="NM_000535.7"/>
    <property type="RefSeq protein sequence ID" value="NP_000526.2"/>
</dbReference>
<dbReference type="UCSC" id="uc003spl.4">
    <molecule id="P54278-1"/>
    <property type="organism name" value="human"/>
</dbReference>
<dbReference type="AGR" id="HGNC:9122"/>
<dbReference type="CTD" id="5395"/>
<dbReference type="DisGeNET" id="5395"/>
<dbReference type="GeneCards" id="PMS2"/>
<dbReference type="GeneReviews" id="PMS2"/>
<dbReference type="HGNC" id="HGNC:9122">
    <property type="gene designation" value="PMS2"/>
</dbReference>
<dbReference type="HPA" id="ENSG00000122512">
    <property type="expression patterns" value="Low tissue specificity"/>
</dbReference>
<dbReference type="MalaCards" id="PMS2"/>
<dbReference type="MIM" id="600259">
    <property type="type" value="gene"/>
</dbReference>
<dbReference type="MIM" id="614337">
    <property type="type" value="phenotype"/>
</dbReference>
<dbReference type="MIM" id="619101">
    <property type="type" value="phenotype"/>
</dbReference>
<dbReference type="neXtProt" id="NX_P54278"/>
<dbReference type="OpenTargets" id="ENSG00000122512"/>
<dbReference type="Orphanet" id="252202">
    <property type="disease" value="Constitutional mismatch repair deficiency syndrome"/>
</dbReference>
<dbReference type="Orphanet" id="144">
    <property type="disease" value="Lynch syndrome"/>
</dbReference>
<dbReference type="PharmGKB" id="PA33448"/>
<dbReference type="VEuPathDB" id="HostDB:ENSG00000122512"/>
<dbReference type="eggNOG" id="KOG1978">
    <property type="taxonomic scope" value="Eukaryota"/>
</dbReference>
<dbReference type="GeneTree" id="ENSGT00940000155381"/>
<dbReference type="HOGENOM" id="CLU_004131_0_2_1"/>
<dbReference type="InParanoid" id="P54278"/>
<dbReference type="OMA" id="MRPRRMP"/>
<dbReference type="OrthoDB" id="10254304at2759"/>
<dbReference type="PAN-GO" id="P54278">
    <property type="GO annotations" value="4 GO annotations based on evolutionary models"/>
</dbReference>
<dbReference type="PhylomeDB" id="P54278"/>
<dbReference type="TreeFam" id="TF300711"/>
<dbReference type="PathwayCommons" id="P54278"/>
<dbReference type="Reactome" id="R-HSA-5358565">
    <property type="pathway name" value="Mismatch repair (MMR) directed by MSH2:MSH6 (MutSalpha)"/>
</dbReference>
<dbReference type="Reactome" id="R-HSA-5358606">
    <property type="pathway name" value="Mismatch repair (MMR) directed by MSH2:MSH3 (MutSbeta)"/>
</dbReference>
<dbReference type="Reactome" id="R-HSA-5545483">
    <property type="pathway name" value="Defective Mismatch Repair Associated With MLH1"/>
</dbReference>
<dbReference type="Reactome" id="R-HSA-5632987">
    <property type="pathway name" value="Defective Mismatch Repair Associated With PMS2"/>
</dbReference>
<dbReference type="Reactome" id="R-HSA-6796648">
    <property type="pathway name" value="TP53 Regulates Transcription of DNA Repair Genes"/>
</dbReference>
<dbReference type="SignaLink" id="P54278"/>
<dbReference type="SIGNOR" id="P54278"/>
<dbReference type="BioGRID-ORCS" id="5395">
    <property type="hits" value="15 hits in 1147 CRISPR screens"/>
</dbReference>
<dbReference type="ChiTaRS" id="PMS2">
    <property type="organism name" value="human"/>
</dbReference>
<dbReference type="EvolutionaryTrace" id="P54278"/>
<dbReference type="GeneWiki" id="PMS2"/>
<dbReference type="Pharos" id="P54278">
    <property type="development level" value="Tbio"/>
</dbReference>
<dbReference type="PRO" id="PR:P54278"/>
<dbReference type="Proteomes" id="UP000005640">
    <property type="component" value="Chromosome 7"/>
</dbReference>
<dbReference type="RNAct" id="P54278">
    <property type="molecule type" value="protein"/>
</dbReference>
<dbReference type="Bgee" id="ENSG00000122512">
    <property type="expression patterns" value="Expressed in thymus and 109 other cell types or tissues"/>
</dbReference>
<dbReference type="ExpressionAtlas" id="P54278">
    <property type="expression patterns" value="baseline and differential"/>
</dbReference>
<dbReference type="GO" id="GO:0005829">
    <property type="term" value="C:cytosol"/>
    <property type="evidence" value="ECO:0000314"/>
    <property type="project" value="HPA"/>
</dbReference>
<dbReference type="GO" id="GO:0032389">
    <property type="term" value="C:MutLalpha complex"/>
    <property type="evidence" value="ECO:0000318"/>
    <property type="project" value="GO_Central"/>
</dbReference>
<dbReference type="GO" id="GO:0005654">
    <property type="term" value="C:nucleoplasm"/>
    <property type="evidence" value="ECO:0000314"/>
    <property type="project" value="HPA"/>
</dbReference>
<dbReference type="GO" id="GO:0005634">
    <property type="term" value="C:nucleus"/>
    <property type="evidence" value="ECO:0000314"/>
    <property type="project" value="UniProtKB"/>
</dbReference>
<dbReference type="GO" id="GO:0005524">
    <property type="term" value="F:ATP binding"/>
    <property type="evidence" value="ECO:0007669"/>
    <property type="project" value="UniProtKB-KW"/>
</dbReference>
<dbReference type="GO" id="GO:0016887">
    <property type="term" value="F:ATP hydrolysis activity"/>
    <property type="evidence" value="ECO:0000318"/>
    <property type="project" value="GO_Central"/>
</dbReference>
<dbReference type="GO" id="GO:0140664">
    <property type="term" value="F:ATP-dependent DNA damage sensor activity"/>
    <property type="evidence" value="ECO:0007669"/>
    <property type="project" value="InterPro"/>
</dbReference>
<dbReference type="GO" id="GO:0003677">
    <property type="term" value="F:DNA binding"/>
    <property type="evidence" value="ECO:0000314"/>
    <property type="project" value="HGNC-UCL"/>
</dbReference>
<dbReference type="GO" id="GO:0004519">
    <property type="term" value="F:endonuclease activity"/>
    <property type="evidence" value="ECO:0000304"/>
    <property type="project" value="Reactome"/>
</dbReference>
<dbReference type="GO" id="GO:0032138">
    <property type="term" value="F:single base insertion or deletion binding"/>
    <property type="evidence" value="ECO:0000314"/>
    <property type="project" value="HGNC-UCL"/>
</dbReference>
<dbReference type="GO" id="GO:0006298">
    <property type="term" value="P:mismatch repair"/>
    <property type="evidence" value="ECO:0000314"/>
    <property type="project" value="UniProtKB"/>
</dbReference>
<dbReference type="GO" id="GO:0048298">
    <property type="term" value="P:positive regulation of isotype switching to IgA isotypes"/>
    <property type="evidence" value="ECO:0007669"/>
    <property type="project" value="Ensembl"/>
</dbReference>
<dbReference type="GO" id="GO:0048304">
    <property type="term" value="P:positive regulation of isotype switching to IgG isotypes"/>
    <property type="evidence" value="ECO:0007669"/>
    <property type="project" value="Ensembl"/>
</dbReference>
<dbReference type="GO" id="GO:0009410">
    <property type="term" value="P:response to xenobiotic stimulus"/>
    <property type="evidence" value="ECO:0007669"/>
    <property type="project" value="Ensembl"/>
</dbReference>
<dbReference type="GO" id="GO:0016446">
    <property type="term" value="P:somatic hypermutation of immunoglobulin genes"/>
    <property type="evidence" value="ECO:0000318"/>
    <property type="project" value="GO_Central"/>
</dbReference>
<dbReference type="GO" id="GO:0016447">
    <property type="term" value="P:somatic recombination of immunoglobulin gene segments"/>
    <property type="evidence" value="ECO:0007669"/>
    <property type="project" value="Ensembl"/>
</dbReference>
<dbReference type="CDD" id="cd16926">
    <property type="entry name" value="HATPase_MutL-MLH-PMS-like"/>
    <property type="match status" value="1"/>
</dbReference>
<dbReference type="CDD" id="cd03484">
    <property type="entry name" value="MutL_Trans_hPMS_2_like"/>
    <property type="match status" value="1"/>
</dbReference>
<dbReference type="FunFam" id="3.30.1370.100:FF:000001">
    <property type="entry name" value="Mismatch repair endonuclease pms1, putative"/>
    <property type="match status" value="1"/>
</dbReference>
<dbReference type="FunFam" id="3.30.565.10:FF:000014">
    <property type="entry name" value="Mismatch repair endonuclease pms1, putative"/>
    <property type="match status" value="1"/>
</dbReference>
<dbReference type="FunFam" id="3.30.230.10:FF:000032">
    <property type="entry name" value="mismatch repair endonuclease PMS2 isoform X2"/>
    <property type="match status" value="1"/>
</dbReference>
<dbReference type="FunFam" id="3.30.1540.20:FF:000019">
    <property type="entry name" value="PMS1 homolog 2, mismatch repair system component"/>
    <property type="match status" value="1"/>
</dbReference>
<dbReference type="Gene3D" id="3.30.230.10">
    <property type="match status" value="1"/>
</dbReference>
<dbReference type="Gene3D" id="3.30.565.10">
    <property type="entry name" value="Histidine kinase-like ATPase, C-terminal domain"/>
    <property type="match status" value="1"/>
</dbReference>
<dbReference type="Gene3D" id="3.30.1540.20">
    <property type="entry name" value="MutL, C-terminal domain, dimerisation subdomain"/>
    <property type="match status" value="1"/>
</dbReference>
<dbReference type="Gene3D" id="3.30.1370.100">
    <property type="entry name" value="MutL, C-terminal domain, regulatory subdomain"/>
    <property type="match status" value="1"/>
</dbReference>
<dbReference type="InterPro" id="IPR014762">
    <property type="entry name" value="DNA_mismatch_repair_CS"/>
</dbReference>
<dbReference type="InterPro" id="IPR013507">
    <property type="entry name" value="DNA_mismatch_S5_2-like"/>
</dbReference>
<dbReference type="InterPro" id="IPR036890">
    <property type="entry name" value="HATPase_C_sf"/>
</dbReference>
<dbReference type="InterPro" id="IPR002099">
    <property type="entry name" value="MutL/Mlh/PMS"/>
</dbReference>
<dbReference type="InterPro" id="IPR038973">
    <property type="entry name" value="MutL/Mlh/Pms-like"/>
</dbReference>
<dbReference type="InterPro" id="IPR014790">
    <property type="entry name" value="MutL_C"/>
</dbReference>
<dbReference type="InterPro" id="IPR042120">
    <property type="entry name" value="MutL_C_dimsub"/>
</dbReference>
<dbReference type="InterPro" id="IPR042121">
    <property type="entry name" value="MutL_C_regsub"/>
</dbReference>
<dbReference type="InterPro" id="IPR037198">
    <property type="entry name" value="MutL_C_sf"/>
</dbReference>
<dbReference type="InterPro" id="IPR020568">
    <property type="entry name" value="Ribosomal_Su5_D2-typ_SF"/>
</dbReference>
<dbReference type="InterPro" id="IPR014721">
    <property type="entry name" value="Ribsml_uS5_D2-typ_fold_subgr"/>
</dbReference>
<dbReference type="NCBIfam" id="TIGR00585">
    <property type="entry name" value="mutl"/>
    <property type="match status" value="1"/>
</dbReference>
<dbReference type="PANTHER" id="PTHR10073">
    <property type="entry name" value="DNA MISMATCH REPAIR PROTEIN MLH, PMS, MUTL"/>
    <property type="match status" value="1"/>
</dbReference>
<dbReference type="PANTHER" id="PTHR10073:SF52">
    <property type="entry name" value="MISMATCH REPAIR ENDONUCLEASE PMS2"/>
    <property type="match status" value="1"/>
</dbReference>
<dbReference type="Pfam" id="PF01119">
    <property type="entry name" value="DNA_mis_repair"/>
    <property type="match status" value="1"/>
</dbReference>
<dbReference type="Pfam" id="PF13589">
    <property type="entry name" value="HATPase_c_3"/>
    <property type="match status" value="1"/>
</dbReference>
<dbReference type="Pfam" id="PF08676">
    <property type="entry name" value="MutL_C"/>
    <property type="match status" value="1"/>
</dbReference>
<dbReference type="SMART" id="SM01340">
    <property type="entry name" value="DNA_mis_repair"/>
    <property type="match status" value="1"/>
</dbReference>
<dbReference type="SMART" id="SM00853">
    <property type="entry name" value="MutL_C"/>
    <property type="match status" value="1"/>
</dbReference>
<dbReference type="SUPFAM" id="SSF55874">
    <property type="entry name" value="ATPase domain of HSP90 chaperone/DNA topoisomerase II/histidine kinase"/>
    <property type="match status" value="1"/>
</dbReference>
<dbReference type="SUPFAM" id="SSF118116">
    <property type="entry name" value="DNA mismatch repair protein MutL"/>
    <property type="match status" value="1"/>
</dbReference>
<dbReference type="SUPFAM" id="SSF54211">
    <property type="entry name" value="Ribosomal protein S5 domain 2-like"/>
    <property type="match status" value="1"/>
</dbReference>
<dbReference type="PROSITE" id="PS00058">
    <property type="entry name" value="DNA_MISMATCH_REPAIR_1"/>
    <property type="match status" value="1"/>
</dbReference>
<name>PMS2_HUMAN</name>
<gene>
    <name evidence="34" type="primary">PMS2</name>
    <name evidence="34" type="synonym">PMSL2</name>
</gene>
<sequence>MERAESSSTEPAKAIKPIDRKSVHQICSGQVVLSLSTAVKELVENSLDAGATNIDLKLKDYGVDLIEVSDNGCGVEEENFEGLTLKHHTSKIQEFADLTQVETFGFRGEALSSLCALSDVTISTCHASAKVGTRLMFDHNGKIIQKTPYPRPRGTTVSVQQLFSTLPVRHKEFQRNIKKEYAKMVQVLHAYCIISAGIRVSCTNQLGQGKRQPVVCTGGSPSIKENIGSVFGQKQLQSLIPFVQLPPSDSVCEEYGLSCSDALHNLFYISGFISQCTHGVGRSSTDRQFFFINRRPCDPAKVCRLVNEVYHMYNRHQYPFVVLNISVDSECVDINVTPDKRQILLQEEKLLLAVLKTSLIGMFDSDVNKLNVSQQPLLDVEGNLIKMHAADLEKPMVEKQDQSPSLRTGEEKKDVSISRLREAFSLRHTTENKPHSPKTPEPRRSPLGQKRGMLSSSTSGAISDKGVLRPQKEAVSSSHGPSDPTDRAEVEKDSGHGSTSVDSEGFSIPDTGSHCSSEYAASSPGDRGSQEHVDSQEKAPKTDDSFSDVDCHSNQEDTGCKFRVLPQPTNLATPNTKRFKKEEILSSSDICQKLVNTQDMSASQVDVAVKINKKVVPLDFSMSSLAKRIKQLHHEAQQSEGEQNYRKFRAKICPGENQAAEDELRKEISKTMFAEMEIIGQFNLGFIITKLNEDIFIVDQHATDEKYNFEMLQQHTVLQGQRLIAPQTLNLTAVNEAVLIENLEIFRKNGFDFVIDENAPVTERAKLISLPTSKNWTFGPQDVDELIFMLSDSPGVMCRPSRVKQMFASRACRKSVMIGTALNTSEMKKLITHMGEMDHPWNCPHGRPTMRHIANLGVISQN</sequence>
<reference key="1">
    <citation type="journal article" date="1994" name="Nature">
        <title>Mutations of two PMS homologues in hereditary nonpolyposis colon cancer.</title>
        <authorList>
            <person name="Nicolaides N.C."/>
            <person name="Papadopoulos N."/>
            <person name="Liu B."/>
            <person name="Wei Y.-F."/>
            <person name="Carter K.C."/>
            <person name="Ruben S.M."/>
            <person name="Rosen C.A."/>
            <person name="Haseltine W.H."/>
            <person name="Fleischmann R.D."/>
            <person name="Fraser C.M."/>
            <person name="Adams M.D."/>
            <person name="Venter J.C."/>
            <person name="Dunlop M.G."/>
            <person name="Hamilton S.R."/>
            <person name="Petersen G.M."/>
            <person name="de la Chapelle A."/>
            <person name="Vogelstein B."/>
            <person name="Kinzler K.W."/>
        </authorList>
    </citation>
    <scope>NUCLEOTIDE SEQUENCE [GENOMIC DNA]</scope>
    <scope>VARIANTS GLN-20 AND GLU-541</scope>
    <source>
        <tissue>Endometrial tumor</tissue>
    </source>
</reference>
<reference key="2">
    <citation type="submission" date="2003-02" db="EMBL/GenBank/DDBJ databases">
        <title>PMS2 mRNA, nirs splice variants.</title>
        <authorList>
            <person name="Tabata Y."/>
            <person name="Sameshima E."/>
            <person name="Hayashi A."/>
            <person name="Iida K."/>
            <person name="Mitsuyama M."/>
            <person name="Kanai S."/>
            <person name="Furuya T."/>
            <person name="Saito T."/>
        </authorList>
    </citation>
    <scope>NUCLEOTIDE SEQUENCE [MRNA] (ISOFORMS 1; 2; 3 AND 4)</scope>
    <scope>VARIANT GLU-541</scope>
</reference>
<reference key="3">
    <citation type="submission" date="1994-10" db="EMBL/GenBank/DDBJ databases">
        <authorList>
            <person name="Bronner C.E."/>
            <person name="Baker S.M."/>
            <person name="Morrison P.T."/>
            <person name="Warren G."/>
            <person name="Smith L.G."/>
            <person name="Lescoe M.K."/>
            <person name="Kane M.F."/>
            <person name="Earibino C."/>
            <person name="Lipford J."/>
            <person name="Lindblom A."/>
            <person name="Tannergaard P."/>
            <person name="Bollag R.J."/>
            <person name="Godwin A.R."/>
            <person name="Ward D.C."/>
            <person name="Nordenskjoeld M."/>
            <person name="Fishel R."/>
            <person name="Kolodner R.D."/>
            <person name="Liskay R.M."/>
        </authorList>
    </citation>
    <scope>NUCLEOTIDE SEQUENCE [MRNA] (ISOFORM 1)</scope>
    <scope>VARIANTS SER-470 AND GLU-541</scope>
</reference>
<reference key="4">
    <citation type="journal article" date="2004" name="Nat. Genet.">
        <title>Complete sequencing and characterization of 21,243 full-length human cDNAs.</title>
        <authorList>
            <person name="Ota T."/>
            <person name="Suzuki Y."/>
            <person name="Nishikawa T."/>
            <person name="Otsuki T."/>
            <person name="Sugiyama T."/>
            <person name="Irie R."/>
            <person name="Wakamatsu A."/>
            <person name="Hayashi K."/>
            <person name="Sato H."/>
            <person name="Nagai K."/>
            <person name="Kimura K."/>
            <person name="Makita H."/>
            <person name="Sekine M."/>
            <person name="Obayashi M."/>
            <person name="Nishi T."/>
            <person name="Shibahara T."/>
            <person name="Tanaka T."/>
            <person name="Ishii S."/>
            <person name="Yamamoto J."/>
            <person name="Saito K."/>
            <person name="Kawai Y."/>
            <person name="Isono Y."/>
            <person name="Nakamura Y."/>
            <person name="Nagahari K."/>
            <person name="Murakami K."/>
            <person name="Yasuda T."/>
            <person name="Iwayanagi T."/>
            <person name="Wagatsuma M."/>
            <person name="Shiratori A."/>
            <person name="Sudo H."/>
            <person name="Hosoiri T."/>
            <person name="Kaku Y."/>
            <person name="Kodaira H."/>
            <person name="Kondo H."/>
            <person name="Sugawara M."/>
            <person name="Takahashi M."/>
            <person name="Kanda K."/>
            <person name="Yokoi T."/>
            <person name="Furuya T."/>
            <person name="Kikkawa E."/>
            <person name="Omura Y."/>
            <person name="Abe K."/>
            <person name="Kamihara K."/>
            <person name="Katsuta N."/>
            <person name="Sato K."/>
            <person name="Tanikawa M."/>
            <person name="Yamazaki M."/>
            <person name="Ninomiya K."/>
            <person name="Ishibashi T."/>
            <person name="Yamashita H."/>
            <person name="Murakawa K."/>
            <person name="Fujimori K."/>
            <person name="Tanai H."/>
            <person name="Kimata M."/>
            <person name="Watanabe M."/>
            <person name="Hiraoka S."/>
            <person name="Chiba Y."/>
            <person name="Ishida S."/>
            <person name="Ono Y."/>
            <person name="Takiguchi S."/>
            <person name="Watanabe S."/>
            <person name="Yosida M."/>
            <person name="Hotuta T."/>
            <person name="Kusano J."/>
            <person name="Kanehori K."/>
            <person name="Takahashi-Fujii A."/>
            <person name="Hara H."/>
            <person name="Tanase T.-O."/>
            <person name="Nomura Y."/>
            <person name="Togiya S."/>
            <person name="Komai F."/>
            <person name="Hara R."/>
            <person name="Takeuchi K."/>
            <person name="Arita M."/>
            <person name="Imose N."/>
            <person name="Musashino K."/>
            <person name="Yuuki H."/>
            <person name="Oshima A."/>
            <person name="Sasaki N."/>
            <person name="Aotsuka S."/>
            <person name="Yoshikawa Y."/>
            <person name="Matsunawa H."/>
            <person name="Ichihara T."/>
            <person name="Shiohata N."/>
            <person name="Sano S."/>
            <person name="Moriya S."/>
            <person name="Momiyama H."/>
            <person name="Satoh N."/>
            <person name="Takami S."/>
            <person name="Terashima Y."/>
            <person name="Suzuki O."/>
            <person name="Nakagawa S."/>
            <person name="Senoh A."/>
            <person name="Mizoguchi H."/>
            <person name="Goto Y."/>
            <person name="Shimizu F."/>
            <person name="Wakebe H."/>
            <person name="Hishigaki H."/>
            <person name="Watanabe T."/>
            <person name="Sugiyama A."/>
            <person name="Takemoto M."/>
            <person name="Kawakami B."/>
            <person name="Yamazaki M."/>
            <person name="Watanabe K."/>
            <person name="Kumagai A."/>
            <person name="Itakura S."/>
            <person name="Fukuzumi Y."/>
            <person name="Fujimori Y."/>
            <person name="Komiyama M."/>
            <person name="Tashiro H."/>
            <person name="Tanigami A."/>
            <person name="Fujiwara T."/>
            <person name="Ono T."/>
            <person name="Yamada K."/>
            <person name="Fujii Y."/>
            <person name="Ozaki K."/>
            <person name="Hirao M."/>
            <person name="Ohmori Y."/>
            <person name="Kawabata A."/>
            <person name="Hikiji T."/>
            <person name="Kobatake N."/>
            <person name="Inagaki H."/>
            <person name="Ikema Y."/>
            <person name="Okamoto S."/>
            <person name="Okitani R."/>
            <person name="Kawakami T."/>
            <person name="Noguchi S."/>
            <person name="Itoh T."/>
            <person name="Shigeta K."/>
            <person name="Senba T."/>
            <person name="Matsumura K."/>
            <person name="Nakajima Y."/>
            <person name="Mizuno T."/>
            <person name="Morinaga M."/>
            <person name="Sasaki M."/>
            <person name="Togashi T."/>
            <person name="Oyama M."/>
            <person name="Hata H."/>
            <person name="Watanabe M."/>
            <person name="Komatsu T."/>
            <person name="Mizushima-Sugano J."/>
            <person name="Satoh T."/>
            <person name="Shirai Y."/>
            <person name="Takahashi Y."/>
            <person name="Nakagawa K."/>
            <person name="Okumura K."/>
            <person name="Nagase T."/>
            <person name="Nomura N."/>
            <person name="Kikuchi H."/>
            <person name="Masuho Y."/>
            <person name="Yamashita R."/>
            <person name="Nakai K."/>
            <person name="Yada T."/>
            <person name="Nakamura Y."/>
            <person name="Ohara O."/>
            <person name="Isogai T."/>
            <person name="Sugano S."/>
        </authorList>
    </citation>
    <scope>NUCLEOTIDE SEQUENCE [LARGE SCALE MRNA] (ISOFORM 1)</scope>
    <scope>VARIANTS SER-470 AND GLU-541</scope>
    <source>
        <tissue>Amygdala</tissue>
    </source>
</reference>
<reference key="5">
    <citation type="journal article" date="2003" name="Nature">
        <title>The DNA sequence of human chromosome 7.</title>
        <authorList>
            <person name="Hillier L.W."/>
            <person name="Fulton R.S."/>
            <person name="Fulton L.A."/>
            <person name="Graves T.A."/>
            <person name="Pepin K.H."/>
            <person name="Wagner-McPherson C."/>
            <person name="Layman D."/>
            <person name="Maas J."/>
            <person name="Jaeger S."/>
            <person name="Walker R."/>
            <person name="Wylie K."/>
            <person name="Sekhon M."/>
            <person name="Becker M.C."/>
            <person name="O'Laughlin M.D."/>
            <person name="Schaller M.E."/>
            <person name="Fewell G.A."/>
            <person name="Delehaunty K.D."/>
            <person name="Miner T.L."/>
            <person name="Nash W.E."/>
            <person name="Cordes M."/>
            <person name="Du H."/>
            <person name="Sun H."/>
            <person name="Edwards J."/>
            <person name="Bradshaw-Cordum H."/>
            <person name="Ali J."/>
            <person name="Andrews S."/>
            <person name="Isak A."/>
            <person name="Vanbrunt A."/>
            <person name="Nguyen C."/>
            <person name="Du F."/>
            <person name="Lamar B."/>
            <person name="Courtney L."/>
            <person name="Kalicki J."/>
            <person name="Ozersky P."/>
            <person name="Bielicki L."/>
            <person name="Scott K."/>
            <person name="Holmes A."/>
            <person name="Harkins R."/>
            <person name="Harris A."/>
            <person name="Strong C.M."/>
            <person name="Hou S."/>
            <person name="Tomlinson C."/>
            <person name="Dauphin-Kohlberg S."/>
            <person name="Kozlowicz-Reilly A."/>
            <person name="Leonard S."/>
            <person name="Rohlfing T."/>
            <person name="Rock S.M."/>
            <person name="Tin-Wollam A.-M."/>
            <person name="Abbott A."/>
            <person name="Minx P."/>
            <person name="Maupin R."/>
            <person name="Strowmatt C."/>
            <person name="Latreille P."/>
            <person name="Miller N."/>
            <person name="Johnson D."/>
            <person name="Murray J."/>
            <person name="Woessner J.P."/>
            <person name="Wendl M.C."/>
            <person name="Yang S.-P."/>
            <person name="Schultz B.R."/>
            <person name="Wallis J.W."/>
            <person name="Spieth J."/>
            <person name="Bieri T.A."/>
            <person name="Nelson J.O."/>
            <person name="Berkowicz N."/>
            <person name="Wohldmann P.E."/>
            <person name="Cook L.L."/>
            <person name="Hickenbotham M.T."/>
            <person name="Eldred J."/>
            <person name="Williams D."/>
            <person name="Bedell J.A."/>
            <person name="Mardis E.R."/>
            <person name="Clifton S.W."/>
            <person name="Chissoe S.L."/>
            <person name="Marra M.A."/>
            <person name="Raymond C."/>
            <person name="Haugen E."/>
            <person name="Gillett W."/>
            <person name="Zhou Y."/>
            <person name="James R."/>
            <person name="Phelps K."/>
            <person name="Iadanoto S."/>
            <person name="Bubb K."/>
            <person name="Simms E."/>
            <person name="Levy R."/>
            <person name="Clendenning J."/>
            <person name="Kaul R."/>
            <person name="Kent W.J."/>
            <person name="Furey T.S."/>
            <person name="Baertsch R.A."/>
            <person name="Brent M.R."/>
            <person name="Keibler E."/>
            <person name="Flicek P."/>
            <person name="Bork P."/>
            <person name="Suyama M."/>
            <person name="Bailey J.A."/>
            <person name="Portnoy M.E."/>
            <person name="Torrents D."/>
            <person name="Chinwalla A.T."/>
            <person name="Gish W.R."/>
            <person name="Eddy S.R."/>
            <person name="McPherson J.D."/>
            <person name="Olson M.V."/>
            <person name="Eichler E.E."/>
            <person name="Green E.D."/>
            <person name="Waterston R.H."/>
            <person name="Wilson R.K."/>
        </authorList>
    </citation>
    <scope>NUCLEOTIDE SEQUENCE [LARGE SCALE GENOMIC DNA]</scope>
</reference>
<reference key="6">
    <citation type="journal article" date="2004" name="Genome Res.">
        <title>The status, quality, and expansion of the NIH full-length cDNA project: the Mammalian Gene Collection (MGC).</title>
        <authorList>
            <consortium name="The MGC Project Team"/>
        </authorList>
    </citation>
    <scope>NUCLEOTIDE SEQUENCE [LARGE SCALE MRNA] (ISOFORM 1)</scope>
    <scope>VARIANTS GLU-541 AND ILE-622</scope>
    <source>
        <tissue>Brain</tissue>
    </source>
</reference>
<reference key="7">
    <citation type="journal article" date="2000" name="Genes Dev.">
        <title>BASC, a super complex of BRCA1-associated proteins involved in the recognition and repair of aberrant DNA structures.</title>
        <authorList>
            <person name="Wang Y."/>
            <person name="Cortez D."/>
            <person name="Yazdi P."/>
            <person name="Neff N."/>
            <person name="Elledge S.J."/>
            <person name="Qin J."/>
        </authorList>
    </citation>
    <scope>IDENTIFICATION OF PMS2 AS MEMBER OF BASC</scope>
</reference>
<reference key="8">
    <citation type="journal article" date="2005" name="Gastroenterology">
        <title>Familial mutations in PMS2 can cause autosomal dominant hereditary nonpolyposis colorectal cancer.</title>
        <authorList>
            <person name="Worthley D.L."/>
            <person name="Walsh M.D."/>
            <person name="Barker M."/>
            <person name="Ruszkiewicz A."/>
            <person name="Bennett G."/>
            <person name="Phillips K."/>
            <person name="Suthers G."/>
        </authorList>
    </citation>
    <scope>INVOLVEMENT IN LYNCH4</scope>
</reference>
<reference key="9">
    <citation type="journal article" date="2006" name="Cell">
        <title>Endonucleolytic function of MutLalpha in human mismatch repair.</title>
        <authorList>
            <person name="Kadyrov F.A."/>
            <person name="Dzantiev L."/>
            <person name="Constantin N."/>
            <person name="Modrich P."/>
        </authorList>
    </citation>
    <scope>FUNCTION AS AN ENDONUCLEASE</scope>
</reference>
<reference key="10">
    <citation type="journal article" date="2008" name="J. Med. Genet.">
        <title>A frame-shift mutation of PMS2 is a widespread cause of Lynch syndrome.</title>
        <authorList>
            <person name="Clendenning M."/>
            <person name="Senter L."/>
            <person name="Hampel H."/>
            <person name="Robinson K.L."/>
            <person name="Sun S."/>
            <person name="Buchanan D."/>
            <person name="Walsh M.D."/>
            <person name="Nilbert M."/>
            <person name="Green J."/>
            <person name="Potter J."/>
            <person name="Lindblom A."/>
            <person name="de la Chapelle A."/>
        </authorList>
    </citation>
    <scope>INVOLVEMENT IN LYNCH4</scope>
</reference>
<reference key="11">
    <citation type="journal article" date="2008" name="Mol. Cell">
        <title>Direct visualization of asymmetric adenine nucleotide-induced conformational changes in MutL alpha.</title>
        <authorList>
            <person name="Sacho E.J."/>
            <person name="Kadyrov F.A."/>
            <person name="Modrich P."/>
            <person name="Kunkel T.A."/>
            <person name="Erie D.A."/>
        </authorList>
    </citation>
    <scope>FUNCTION</scope>
</reference>
<reference key="12">
    <citation type="journal article" date="2005" name="J. Biol. Chem.">
        <title>Human mismatch repair: reconstitution of a nick-directed bidirectional reaction.</title>
        <authorList>
            <person name="Constantin N."/>
            <person name="Dzantiev L."/>
            <person name="Kadyrov F.A."/>
            <person name="Modrich P."/>
        </authorList>
    </citation>
    <scope>REVIEW</scope>
</reference>
<reference key="13">
    <citation type="journal article" date="2006" name="Cell">
        <title>MutLalpha: at the cutting edge of mismatch repair.</title>
        <authorList>
            <person name="Jiricny J."/>
        </authorList>
    </citation>
    <scope>REVIEW</scope>
</reference>
<reference key="14">
    <citation type="journal article" date="2008" name="Cell Res.">
        <title>Mechanisms and functions of DNA mismatch repair.</title>
        <authorList>
            <person name="Li G.M."/>
        </authorList>
    </citation>
    <scope>REVIEW</scope>
</reference>
<reference key="15">
    <citation type="journal article" date="2010" name="Mol. Cell">
        <title>A genetic screen identifies FAN1, a Fanconi anemia-associated nuclease necessary for DNA interstrand crosslink repair.</title>
        <authorList>
            <person name="Smogorzewska A."/>
            <person name="Desetty R."/>
            <person name="Saito T.T."/>
            <person name="Schlabach M."/>
            <person name="Lach F.P."/>
            <person name="Sowa M.E."/>
            <person name="Clark A.B."/>
            <person name="Kunkel T.A."/>
            <person name="Harper J.W."/>
            <person name="Colaiacovo M.P."/>
            <person name="Elledge S.J."/>
        </authorList>
    </citation>
    <scope>INTERACTION WITH MTMR15</scope>
</reference>
<reference key="16">
    <citation type="journal article" date="2010" name="Sci. Signal.">
        <title>Quantitative phosphoproteomics reveals widespread full phosphorylation site occupancy during mitosis.</title>
        <authorList>
            <person name="Olsen J.V."/>
            <person name="Vermeulen M."/>
            <person name="Santamaria A."/>
            <person name="Kumar C."/>
            <person name="Miller M.L."/>
            <person name="Jensen L.J."/>
            <person name="Gnad F."/>
            <person name="Cox J."/>
            <person name="Jensen T.S."/>
            <person name="Nigg E.A."/>
            <person name="Brunak S."/>
            <person name="Mann M."/>
        </authorList>
    </citation>
    <scope>PHOSPHORYLATION [LARGE SCALE ANALYSIS] AT THR-597</scope>
    <scope>IDENTIFICATION BY MASS SPECTROMETRY [LARGE SCALE ANALYSIS]</scope>
    <source>
        <tissue>Cervix carcinoma</tissue>
    </source>
</reference>
<reference key="17">
    <citation type="journal article" date="2013" name="J. Proteome Res.">
        <title>Toward a comprehensive characterization of a human cancer cell phosphoproteome.</title>
        <authorList>
            <person name="Zhou H."/>
            <person name="Di Palma S."/>
            <person name="Preisinger C."/>
            <person name="Peng M."/>
            <person name="Polat A.N."/>
            <person name="Heck A.J."/>
            <person name="Mohammed S."/>
        </authorList>
    </citation>
    <scope>PHOSPHORYLATION [LARGE SCALE ANALYSIS] AT THR-573</scope>
    <scope>IDENTIFICATION BY MASS SPECTROMETRY [LARGE SCALE ANALYSIS]</scope>
    <source>
        <tissue>Erythroleukemia</tissue>
    </source>
</reference>
<reference evidence="35 36 37" key="18">
    <citation type="journal article" date="2001" name="EMBO J.">
        <title>Structure and function of the N-terminal 40 kDa fragment of human PMS2: a monomeric GHL ATPase.</title>
        <authorList>
            <person name="Guarne A."/>
            <person name="Junop M.S."/>
            <person name="Yang W."/>
        </authorList>
    </citation>
    <scope>X-RAY CRYSTALLOGRAPHY (1.95 ANGSTROMS) OF 1-365 IN COMPLEX WITH ADP OR ATP</scope>
    <scope>CATALYTIC ACTIVITY</scope>
    <scope>MUTAGENESIS OF GLU-41</scope>
</reference>
<reference evidence="38" key="19">
    <citation type="journal article" date="2018" name="Biochimie">
        <title>DNA mismatch repair proteins MLH1 and PMS2 can be imported to the nucleus by a classical nuclear import pathway.</title>
        <authorList>
            <person name="de Barros A.C."/>
            <person name="Takeda A.A.S."/>
            <person name="Dreyer T.R."/>
            <person name="Velazquez-Campoy A."/>
            <person name="Kobe B."/>
            <person name="Fontes M.R.M."/>
        </authorList>
    </citation>
    <scope>X-RAY CRYSTALLOGRAPHY (2.10 ANGSTROMS) OF 573-583</scope>
    <scope>NUCLEAR LOCALIZATION SIGNAL</scope>
    <scope>MUTAGENESIS OF LYS-577 AND ARG-578</scope>
</reference>
<reference evidence="39" key="20">
    <citation type="journal article" date="2019" name="Hum. Mutat.">
        <title>Biochemical and structural characterization of two variants of uncertain significance in the PMS2 gene.</title>
        <authorList>
            <person name="D'Arcy B.M."/>
            <person name="Blount J."/>
            <person name="Prakash A."/>
        </authorList>
    </citation>
    <scope>X-RAY CRYSTALLOGRAPHY (2.60 ANGSTROMS) OF 1-365</scope>
    <scope>SUBCELLULAR LOCATION</scope>
    <scope>CATALYTIC ACTIVITY</scope>
    <scope>CHARACTERIZATION OF VARIANTS LYNCH4 42-LEU--GLU-44 DEL AND GLU-207</scope>
</reference>
<reference evidence="40 41 42" key="21">
    <citation type="journal article" date="2022" name="Mol. Genet. Genomic Med.">
        <title>PMS2 variant results in loss of ATPase activity without compromising mismatch repair.</title>
        <authorList>
            <person name="D'Arcy B.M."/>
            <person name="Arrington J."/>
            <person name="Weisman J."/>
            <person name="McClellan S.B."/>
            <person name="Vandana X."/>
            <person name="Yang Z."/>
            <person name="Deivanayagam C."/>
            <person name="Blount J."/>
            <person name="Prakash A."/>
        </authorList>
    </citation>
    <scope>X-RAY CRYSTALLOGRAPHY (2.00 ANGSTROMS) OF 1-365</scope>
    <scope>INTERACTION WITH MLH1</scope>
    <scope>CHARACTERIZATION OF VARIANTS LYNCH4 42-LEU--GLU-44 DEL; GLU-232; ARG-238; SER-335; HIS-699; LYS-705; ARG-779; GLN-799 AND GLU-816</scope>
</reference>
<reference key="22">
    <citation type="journal article" date="1995" name="N. Engl. J. Med.">
        <title>The molecular basis of Turcot's syndrome.</title>
        <authorList>
            <person name="Hamilton S.R."/>
            <person name="Liu B."/>
            <person name="Parsons R.E."/>
            <person name="Papadopoulos N."/>
            <person name="Jen J."/>
            <person name="Powell S.M."/>
            <person name="Krush A.J."/>
            <person name="Berk T."/>
            <person name="Cohen Z."/>
            <person name="Tetu B."/>
            <person name="Burger P.C."/>
            <person name="Wood P.A."/>
            <person name="Taqi F."/>
            <person name="Booker S.V."/>
            <person name="Petersen G.M."/>
            <person name="Offerhaus G.J.A."/>
            <person name="Tersmette A.C."/>
            <person name="Giardiello F.M."/>
            <person name="Vogelstein B."/>
            <person name="Kinzler K.W."/>
        </authorList>
    </citation>
    <scope>INVOLVEMENT IN MMRCS4</scope>
</reference>
<reference key="23">
    <citation type="journal article" date="1997" name="Oncogene">
        <title>Drastic genetic instability of tumors and normal tissues in Turcot syndrome.</title>
        <authorList>
            <person name="Miyaki M."/>
            <person name="Nishio J."/>
            <person name="Konishi M."/>
            <person name="Kikuchi-Yanoshita R."/>
            <person name="Tanaka K."/>
            <person name="Muraoka M."/>
            <person name="Nagato M."/>
            <person name="Chong J.-M."/>
            <person name="Koike M."/>
            <person name="Terada T."/>
            <person name="Kawahara Y."/>
            <person name="Fukutome A."/>
            <person name="Tomiyama J."/>
            <person name="Chuganji Y."/>
            <person name="Momoi M."/>
            <person name="Utsunomiya J."/>
        </authorList>
    </citation>
    <scope>VARIANT MMRCS4 LYS-705</scope>
</reference>
<reference key="24">
    <citation type="journal article" date="1999" name="Hum. Genet.">
        <title>Prevalence of germline mutations of hMLH1, hMSH2, hPMS1, hPMS2, and hMSH6 genes in 75 French kindreds with nonpolyposis colorectal cancer.</title>
        <authorList>
            <person name="Wang Q."/>
            <person name="Lasset C."/>
            <person name="Desseigne F."/>
            <person name="Saurin J.-C."/>
            <person name="Maugard C."/>
            <person name="Navarro C."/>
            <person name="Ruano E."/>
            <person name="Descos L."/>
            <person name="Trillet-Lenoir V."/>
            <person name="Bosset J.-F."/>
            <person name="Puisieux A."/>
        </authorList>
    </citation>
    <scope>VARIANTS LYNCH4 GLN-479 AND ILE-622</scope>
    <scope>VARIANTS LYS-485; ALA-511 AND SER-597</scope>
</reference>
<reference key="25">
    <citation type="journal article" date="2002" name="Hum. Mutat.">
        <title>Polymorphisms and HNPCC: PMS2-MLH1 protein interactions diminished by single nucleotide polymorphisms.</title>
        <authorList>
            <person name="Yuan Z.Q."/>
            <person name="Gottlieb B."/>
            <person name="Beitel L.K."/>
            <person name="Wong N."/>
            <person name="Gordon P.H."/>
            <person name="Wang Q."/>
            <person name="Puisieux A."/>
            <person name="Foulkes W.D."/>
            <person name="Trifiro M."/>
        </authorList>
    </citation>
    <scope>CHARACTERIZATION OF VARIANT LYNCH4 ILE-622</scope>
    <scope>CHARACTERIZATION OF VARIANT SER-597</scope>
</reference>
<reference key="26">
    <citation type="journal article" date="2004" name="Am. J. Hum. Genet.">
        <title>Novel PMS2 pseudogenes can conceal recessive mutations causing a distinctive childhood cancer syndrome.</title>
        <authorList>
            <person name="De Vos M."/>
            <person name="Hayward B.E."/>
            <person name="Picton S."/>
            <person name="Sheridan E."/>
            <person name="Bonthron D.T."/>
        </authorList>
    </citation>
    <scope>INVOLVEMENT IN MMRCS4</scope>
</reference>
<reference key="27">
    <citation type="journal article" date="2006" name="Gastroenterology">
        <title>Heterozygous mutations in PMS2 cause hereditary nonpolyposis colorectal carcinoma (Lynch syndrome).</title>
        <authorList>
            <person name="Hendriks Y.M."/>
            <person name="Jagmohan-Changur S."/>
            <person name="van der Klift H.M."/>
            <person name="Morreau H."/>
            <person name="van Puijenbroek M."/>
            <person name="Tops C."/>
            <person name="van Os T."/>
            <person name="Wagner A."/>
            <person name="Ausems M.G."/>
            <person name="Gomez E."/>
            <person name="Breuning M.H."/>
            <person name="Broecker-Vriends A.H."/>
            <person name="Vasen H.F."/>
            <person name="Wijnen J.T."/>
        </authorList>
    </citation>
    <scope>VARIANTS LYNCH4 ILE-585 AND ILE-622</scope>
    <scope>VARIANTS VAL-18; GLN-20; SER-470; LYS-485; GLU-541; SER-597 AND ALA-857</scope>
</reference>
<reference key="28">
    <citation type="journal article" date="2006" name="Hum. Mutat.">
        <title>Long-range PCR facilitates the identification of PMS2-specific mutations.</title>
        <authorList>
            <person name="Clendenning M."/>
            <person name="Hampel H."/>
            <person name="LaJeunesse J."/>
            <person name="Lindblom A."/>
            <person name="Lockman J."/>
            <person name="Nilbert M."/>
            <person name="Senter L."/>
            <person name="Sotamaa K."/>
            <person name="de la Chapelle A."/>
        </authorList>
    </citation>
    <scope>VARIANTS LYNCH4 THR-182 AND ARG-797</scope>
    <scope>VARIANTS VAL-18 AND LEU-563</scope>
</reference>
<reference key="29">
    <citation type="journal article" date="2007" name="Hum. Mutat.">
        <title>Novel biallelic mutations in MSH6 and PMS2 genes: gene conversion as a likely cause of PMS2 gene inactivation.</title>
        <authorList>
            <person name="Auclair J."/>
            <person name="Leroux D."/>
            <person name="Desseigne F."/>
            <person name="Lasset C."/>
            <person name="Saurin J.C."/>
            <person name="Joly M.O."/>
            <person name="Pinson S."/>
            <person name="Xu X.L."/>
            <person name="Montmain G."/>
            <person name="Ruano E."/>
            <person name="Navarro C."/>
            <person name="Puisieux A."/>
            <person name="Wang Q."/>
        </authorList>
    </citation>
    <scope>VARIANT MMRCS4 ILE-46</scope>
</reference>
<reference key="30">
    <citation type="journal article" date="2008" name="Gastroenterology">
        <title>The clinical phenotype of Lynch syndrome due to germ-line PMS2 mutations.</title>
        <authorList>
            <person name="Senter L."/>
            <person name="Clendenning M."/>
            <person name="Sotamaa K."/>
            <person name="Hampel H."/>
            <person name="Green J."/>
            <person name="Potter J.D."/>
            <person name="Lindblom A."/>
            <person name="Lagerstedt K."/>
            <person name="Thibodeau S.N."/>
            <person name="Lindor N.M."/>
            <person name="Young J."/>
            <person name="Winship I."/>
            <person name="Dowty J.G."/>
            <person name="White D.M."/>
            <person name="Hopper J.L."/>
            <person name="Baglietto L."/>
            <person name="Jenkins M.A."/>
            <person name="de la Chapelle A."/>
        </authorList>
    </citation>
    <scope>VARIANTS LYNCH4 ASN-46; ILE-46; PRO-205; ILE-622; ALA-663; LYS-705; ASP-750 AND TYR-843</scope>
    <scope>VARIANT LEU-563</scope>
</reference>
<reference key="31">
    <citation type="journal article" date="2009" name="Int. J. Colorectal Dis.">
        <title>Four novel germline mutations in the MLH1 and PMS2 mismatch repair genes in patients with hereditary nonpolyposis colorectal cancer.</title>
        <authorList>
            <person name="Montazer Haghighi M."/>
            <person name="Radpour R."/>
            <person name="Aghajani K."/>
            <person name="Zali N."/>
            <person name="Molaei M."/>
            <person name="Zali M.R."/>
        </authorList>
    </citation>
    <scope>VARIANT LYNCH4 GLU-207</scope>
</reference>
<reference key="32">
    <citation type="journal article" date="2010" name="Hum. Mutat.">
        <title>Functional PMS2 hybrid alleles containing a pseudogene-specific missense variant trace back to a single ancient intrachromosomal recombination event.</title>
        <authorList>
            <person name="Ganster C."/>
            <person name="Wernstedt A."/>
            <person name="Kehrer-Sawatzki H."/>
            <person name="Messiaen L."/>
            <person name="Schmidt K."/>
            <person name="Rahner N."/>
            <person name="Heinimann K."/>
            <person name="Fonatsch C."/>
            <person name="Zschocke J."/>
            <person name="Wimmer K."/>
        </authorList>
    </citation>
    <scope>VARIANTS THR-423; MET-511 AND PRO-511</scope>
</reference>
<reference key="33">
    <citation type="journal article" date="2010" name="Hum. Mutat.">
        <title>Clinical analysis of PMS2: mutation detection and avoidance of pseudogenes.</title>
        <authorList>
            <person name="Vaughn C.P."/>
            <person name="Robles J."/>
            <person name="Swensen J.J."/>
            <person name="Miller C.E."/>
            <person name="Lyon E."/>
            <person name="Mao R."/>
            <person name="Bayrak-Toydemir P."/>
            <person name="Samowitz W.S."/>
        </authorList>
    </citation>
    <scope>VARIANTS LYNCH4 VAL-18; THR-18; GLN-20; LEU-128; ILE-321; SER-470; GLN-479; LYS-485; ALA-511; LEU-563; SER-597; ILE-622; HIS-699; MET-786 AND ALA-857</scope>
    <scope>VARIANT GLU-541</scope>
</reference>
<reference key="34">
    <citation type="journal article" date="2013" name="Hum. Mutat.">
        <title>Inactivation of DNA mismatch repair by variants of uncertain significance in the PMS2 gene.</title>
        <authorList>
            <person name="Drost M."/>
            <person name="Koppejan H."/>
            <person name="de Wind N."/>
        </authorList>
    </citation>
    <scope>CHARACTERIZATION OF VARIANTS VAL-18; GLN-20; ALA-41; GLU-60; THR-423; LYS-485; ALA-511; MET-511; GLU-541; LEU-563; ILE-571; SER-597 AND ALA-857</scope>
    <scope>CHARACTERIZATION OF VARIANTS LYNCH4 ASN-46; ILE-46; PRO-205; GLU-207; VAL-263; GLN-479; ILE-622; ALA-663; LYS-705; ASP-750; ARG-797 AND TYR-843</scope>
    <scope>MUTAGENESIS OF GLU-41 AND TYR-519</scope>
</reference>
<reference key="35">
    <citation type="journal article" date="2013" name="J. Med. Genet.">
        <title>Refining the role of PMS2 in Lynch syndrome: germline mutational analysis improved by comprehensive assessment of variants.</title>
        <authorList>
            <person name="Borras E."/>
            <person name="Pineda M."/>
            <person name="Cadinanos J."/>
            <person name="Del Valle J."/>
            <person name="Brieger A."/>
            <person name="Hinrichsen I."/>
            <person name="Cabanillas R."/>
            <person name="Navarro M."/>
            <person name="Brunet J."/>
            <person name="Sanjuan X."/>
            <person name="Musulen E."/>
            <person name="van der Klift H."/>
            <person name="Lazaro C."/>
            <person name="Plotz G."/>
            <person name="Blanco I."/>
            <person name="Capella G."/>
        </authorList>
    </citation>
    <scope>VARIANT LYNCH4 ILE-46</scope>
    <scope>VARIANTS GLN-20; SER-470; SER-597 AND SER-775</scope>
    <scope>CHARACTERIZATION OF VARIANT LYNCH4 ILE-46</scope>
    <scope>CHARACTERIZATION OF VARIANTS GLN-20 AND SER-470</scope>
    <scope>MUTAGENESIS OF ASP-70</scope>
    <scope>FUNCTION</scope>
    <scope>SUBCELLULAR LOCATION</scope>
</reference>
<reference key="36">
    <citation type="journal article" date="2016" name="Hum. Mutat.">
        <title>Comprehensive mutation analysis of PMS2 in a large cohort of probands suspected of lynch syndrome or constitutional mismatch repair deficiency syndrome.</title>
        <authorList>
            <person name="van der Klift H.M."/>
            <person name="Mensenkamp A.R."/>
            <person name="Drost M."/>
            <person name="Bik E.C."/>
            <person name="Vos Y.J."/>
            <person name="Gille H.J."/>
            <person name="Redeker B.E."/>
            <person name="Tiersma Y."/>
            <person name="Zonneveld J.B."/>
            <person name="Garcia E.G."/>
            <person name="Letteboer T.G."/>
            <person name="Olderode-Berends M.J."/>
            <person name="van Hest L.P."/>
            <person name="van Os T.A."/>
            <person name="Verhoef S."/>
            <person name="Wagner A."/>
            <person name="van Asperen C.J."/>
            <person name="Ten Broeke S.W."/>
            <person name="Hes F.J."/>
            <person name="de Wind N."/>
            <person name="Nielsen M."/>
            <person name="Devilee P."/>
            <person name="Ligtenberg M.J."/>
            <person name="Wijnen J.T."/>
            <person name="Tops C.M."/>
        </authorList>
    </citation>
    <scope>VARIANTS MMRCS4 ILE-46; THR-66; TRP-107; GLY-115; PRO-205; VAL-263; LYS-307; SER-437; GLN-479; VAL-488; GLN-504; ILE-585 AND LEU-815</scope>
    <scope>CHARACTERIZATION OF VARIANTS MMRCS4 ILE-46; THR-66; TRP-107; GLY-115; LYS-307; SER-437; VAL-488; GLN-504 AND LEU-815</scope>
    <scope>VARIANTS VAL-18; GLU-60; SER-470; LEU-563; ILE-571 AND SER-775</scope>
    <scope>CHARACTERIZATION OF VARIANTS SER-470 AND SER-775</scope>
</reference>
<reference key="37">
    <citation type="journal article" date="2017" name="Cancer Biol. Ther.">
        <title>Functional analysis of rare variants in mismatch repair proteins augments results from computation-based predictive methods.</title>
        <authorList>
            <person name="Arora S."/>
            <person name="Huwe P.J."/>
            <person name="Sikder R."/>
            <person name="Shah M."/>
            <person name="Browne A.J."/>
            <person name="Lesh R."/>
            <person name="Nicolas E."/>
            <person name="Deshpande S."/>
            <person name="Hall M.J."/>
            <person name="Dunbrack R.L. Jr."/>
            <person name="Golemis E.A."/>
        </authorList>
    </citation>
    <scope>VARIANTS ARG-36; GLU-475; HIS-699; ASN-792 AND MET-853</scope>
    <scope>CHARACTERIZATION OF VARIANTS ARG-36; GLU-475; HIS-699; ASN-792 AND MET-853</scope>
</reference>
<accession>P54278</accession>
<accession>B2R610</accession>
<accession>Q52LH6</accession>
<accession>Q5FBW9</accession>
<accession>Q5FBX1</accession>
<accession>Q5FBX2</accession>
<accession>Q75MR2</accession>